<protein>
    <recommendedName>
        <fullName>Advanced glycosylation end product-specific receptor</fullName>
    </recommendedName>
    <alternativeName>
        <fullName>Receptor for advanced glycosylation end products</fullName>
    </alternativeName>
</protein>
<comment type="function">
    <text evidence="1 6 7 9 10 11 14 16 17 18 20 21 22 23 24">Cell surface pattern recognition receptor that senses endogenous stress signals with a broad ligand repertoire including advanced glycation end products, S100 proteins, high-mobility group box 1 protein/HMGB1, amyloid beta/APP oligomers, nucleic acids, histones, phospholipids and glycosaminoglycans (PubMed:27572515, PubMed:28515150, PubMed:34743181, PubMed:35974093, PubMed:24081950). Advanced glycosylation end products are nonenzymatically glycosylated proteins which accumulate in vascular tissue in aging and at an accelerated rate in diabetes (PubMed:21565706). These ligands accumulate at inflammatory sites during the pathogenesis of various diseases including diabetes, vascular complications, neurodegenerative disorders and cancers, and RAGE transduces their binding into pro-inflammatory responses. Upon ligand binding, uses TIRAP and MYD88 as adapters to transduce the signal ultimately leading to the induction of inflammatory cytokines IL6, IL8 and TNFalpha through activation of NF-kappa-B (PubMed:21829704, PubMed:33436632). Interaction with S100A12 on endothelium, mononuclear phagocytes, and lymphocytes triggers cellular activation, with generation of key pro-inflammatory mediators (PubMed:19386136). Interaction with S100B after myocardial infarction may play a role in myocyte apoptosis by activating ERK1/2 and p53/TP53 signaling (By similarity). Contributes to the translocation of amyloid-beta peptide (ABPP) across the cell membrane from the extracellular to the intracellular space in cortical neurons (PubMed:19906677). ABPP-initiated RAGE signaling, especially stimulation of p38 mitogen-activated protein kinase (MAPK), has the capacity to drive a transport system delivering ABPP as a complex with RAGE to the intraneuronal space. Participates in endothelial albumin transcytosis together with HMGB1 through the RAGE/SRC/Caveolin-1 pathway, leading to endothelial hyperpermeability (PubMed:27572515). Mediates the loading of HMGB1 in extracellular vesicles (EVs) that shuttle HMGB1 to hepatocytes by transferrin-mediated endocytosis and subsequently promote hepatocyte pyroptosis by activating the NLRP3 inflammasome (PubMed:34743181). Binds to DNA and promotes extracellular hypomethylated DNA (CpG DNA) uptake by cells via the endosomal route to activate inflammatory responses (PubMed:24081950, PubMed:28515150). Mediates phagocytosis by non-professional phagocytes (NPP) and this is enhanced by binding to ligands including RNA, DNA, HMGB1 and histones (PubMed:35974093). Promotes NPP-mediated phagocytosis of Saccharomyces cerevisiae spores by binding to RNA attached to the spore wall (PubMed:35974093). Also promotes NPP-mediated phagocytosis of apoptotic cells (PubMed:35974093). Following DNA damage, recruited to DNA double-strand break sites where it colocalizes with the MRN repair complex via interaction with double-strand break repair protein MRE11 (By similarity). Enhances the endonuclease activity of MRE11, promoting the end resection of damaged DNA (By similarity). Promotes DNA damage repair in trophoblasts which enhances trophoblast invasion and contributes to placental development and maintenance (PubMed:33918759). Protects cells from DNA replication stress by localizing to damaged replication forks where it stabilizes the MCM2-7 complex and promotes faithful progression of the replication fork (PubMed:36807739). Mediates the production of reactive oxygen species (ROS) in human endothelial cells (PubMed:25401185).</text>
</comment>
<comment type="subunit">
    <text evidence="1 5 7 8 9 10 11 13 14 16 20 21 22 24">Constitutive homodimer; disulfide-linked (PubMed:24081950). Forms homooligomers (PubMed:24081950). Interacts with S100A1 and APP (By similarity). Interacts with S100B, S100A12 and S100A14. Interacts with TIRAP (PubMed:21829704). Interacts with HMGB1 (PubMed:34743181). Interacts with LGP2; this interaction plays an important role in AGER-mediated pro-inflammatory responses and cytokine release (PubMed:33436632). Interacts with double-strand break repair protein MRE11 which is a core component of the MRN complex (PubMed:33918759). The interaction enhances MRE11 endonuclease activity and promotes DNA repair (By similarity). Interacts with the MCM2-7 complex via interaction with complex member MCM2; the interaction is increased following DNA replication stress and stabilizes the MCM2-7 complex at replication forks (PubMed:36807739). Interacts with longistatin, a protein from the saliva of the tick, Haemaphysalis longicornis; the interaction attenuates AGER-mediated production of reactive oxygen species (ROS), activation of NF-kappa-B and expression of adhesion molecules and cytokines in human endothelial cells (PubMed:25401185).</text>
</comment>
<comment type="interaction">
    <interactant intactId="EBI-1646426">
        <id>Q15109</id>
    </interactant>
    <interactant intactId="EBI-1646426">
        <id>Q15109</id>
        <label>AGER</label>
    </interactant>
    <organismsDiffer>false</organismsDiffer>
    <experiments>2</experiments>
</comment>
<comment type="interaction">
    <interactant intactId="EBI-1646426">
        <id>Q15109</id>
    </interactant>
    <interactant intactId="EBI-77613">
        <id>P05067</id>
        <label>APP</label>
    </interactant>
    <organismsDiffer>false</organismsDiffer>
    <experiments>3</experiments>
</comment>
<comment type="interaction">
    <interactant intactId="EBI-1646426">
        <id>Q15109</id>
    </interactant>
    <interactant intactId="EBI-12275524">
        <id>P23560-2</id>
        <label>BDNF</label>
    </interactant>
    <organismsDiffer>false</organismsDiffer>
    <experiments>3</experiments>
</comment>
<comment type="interaction">
    <interactant intactId="EBI-1646426">
        <id>Q15109</id>
    </interactant>
    <interactant intactId="EBI-12904676">
        <id>Q8WU43</id>
        <label>C2orf15</label>
    </interactant>
    <organismsDiffer>false</organismsDiffer>
    <experiments>3</experiments>
</comment>
<comment type="interaction">
    <interactant intactId="EBI-1646426">
        <id>Q15109</id>
    </interactant>
    <interactant intactId="EBI-2807956">
        <id>Q96FZ5</id>
        <label>CMTM7</label>
    </interactant>
    <organismsDiffer>false</organismsDiffer>
    <experiments>3</experiments>
</comment>
<comment type="interaction">
    <interactant intactId="EBI-1646426">
        <id>Q15109</id>
    </interactant>
    <interactant intactId="EBI-625022">
        <id>O43889-2</id>
        <label>CREB3</label>
    </interactant>
    <organismsDiffer>false</organismsDiffer>
    <experiments>3</experiments>
</comment>
<comment type="interaction">
    <interactant intactId="EBI-1646426">
        <id>Q15109</id>
    </interactant>
    <interactant intactId="EBI-3959709">
        <id>O60610</id>
        <label>DIAPH1</label>
    </interactant>
    <organismsDiffer>false</organismsDiffer>
    <experiments>3</experiments>
</comment>
<comment type="interaction">
    <interactant intactId="EBI-1646426">
        <id>Q15109</id>
    </interactant>
    <interactant intactId="EBI-297353">
        <id>P00533</id>
        <label>EGFR</label>
    </interactant>
    <organismsDiffer>false</organismsDiffer>
    <experiments>2</experiments>
</comment>
<comment type="interaction">
    <interactant intactId="EBI-1646426">
        <id>Q15109</id>
    </interactant>
    <interactant intactId="EBI-401755">
        <id>P62993</id>
        <label>GRB2</label>
    </interactant>
    <organismsDiffer>false</organismsDiffer>
    <experiments>2</experiments>
</comment>
<comment type="interaction">
    <interactant intactId="EBI-1646426">
        <id>Q15109</id>
    </interactant>
    <interactant intactId="EBI-389432">
        <id>P09429</id>
        <label>HMGB1</label>
    </interactant>
    <organismsDiffer>false</organismsDiffer>
    <experiments>3</experiments>
</comment>
<comment type="interaction">
    <interactant intactId="EBI-1646426">
        <id>Q15109</id>
    </interactant>
    <interactant intactId="EBI-1201460">
        <id>Q8IW41</id>
        <label>MAPKAPK5</label>
    </interactant>
    <organismsDiffer>false</organismsDiffer>
    <experiments>6</experiments>
</comment>
<comment type="interaction">
    <interactant intactId="EBI-1646426">
        <id>Q15109</id>
    </interactant>
    <interactant intactId="EBI-25830642">
        <id>Q8N108-16</id>
        <label>MIER1</label>
    </interactant>
    <organismsDiffer>false</organismsDiffer>
    <experiments>3</experiments>
</comment>
<comment type="interaction">
    <interactant intactId="EBI-1646426">
        <id>Q15109</id>
    </interactant>
    <interactant intactId="EBI-389883">
        <id>P16333</id>
        <label>NCK1</label>
    </interactant>
    <organismsDiffer>false</organismsDiffer>
    <experiments>2</experiments>
</comment>
<comment type="interaction">
    <interactant intactId="EBI-1646426">
        <id>Q15109</id>
    </interactant>
    <interactant intactId="EBI-295351">
        <id>Q05513</id>
        <label>PRKCZ</label>
    </interactant>
    <organismsDiffer>false</organismsDiffer>
    <experiments>6</experiments>
</comment>
<comment type="interaction">
    <interactant intactId="EBI-1646426">
        <id>Q15109</id>
    </interactant>
    <interactant intactId="EBI-446668">
        <id>P61586</id>
        <label>RHOA</label>
    </interactant>
    <organismsDiffer>false</organismsDiffer>
    <experiments>2</experiments>
</comment>
<comment type="interaction">
    <interactant intactId="EBI-1646426">
        <id>Q15109</id>
    </interactant>
    <interactant intactId="EBI-2823305">
        <id>P80511</id>
        <label>S100A12</label>
    </interactant>
    <organismsDiffer>false</organismsDiffer>
    <experiments>2</experiments>
</comment>
<comment type="interaction">
    <interactant intactId="EBI-1646426">
        <id>Q15109</id>
    </interactant>
    <interactant intactId="EBI-458391">
        <id>P04271</id>
        <label>S100B</label>
    </interactant>
    <organismsDiffer>false</organismsDiffer>
    <experiments>5</experiments>
</comment>
<comment type="interaction">
    <interactant intactId="EBI-1646426">
        <id>Q15109</id>
    </interactant>
    <interactant intactId="EBI-743700">
        <id>P25815</id>
        <label>S100P</label>
    </interactant>
    <organismsDiffer>false</organismsDiffer>
    <experiments>2</experiments>
</comment>
<comment type="interaction">
    <interactant intactId="EBI-1646426">
        <id>Q15109</id>
    </interactant>
    <interactant intactId="EBI-528644">
        <id>P58753</id>
        <label>TIRAP</label>
    </interactant>
    <organismsDiffer>false</organismsDiffer>
    <experiments>9</experiments>
</comment>
<comment type="interaction">
    <interactant intactId="EBI-1646426">
        <id>Q15109</id>
    </interactant>
    <interactant intactId="EBI-10243654">
        <id>Q5BVD1</id>
        <label>TTMP</label>
    </interactant>
    <organismsDiffer>false</organismsDiffer>
    <experiments>3</experiments>
</comment>
<comment type="interaction">
    <interactant intactId="EBI-1646426">
        <id>Q15109</id>
    </interactant>
    <interactant intactId="EBI-711909">
        <id>P02766</id>
        <label>TTR</label>
    </interactant>
    <organismsDiffer>false</organismsDiffer>
    <experiments>2</experiments>
</comment>
<comment type="interaction">
    <interactant intactId="EBI-1646426">
        <id>Q15109</id>
    </interactant>
    <interactant intactId="EBI-6296235">
        <id>Q01279</id>
        <label>Egfr</label>
    </interactant>
    <organismsDiffer>true</organismsDiffer>
    <experiments>2</experiments>
</comment>
<comment type="subcellular location">
    <subcellularLocation>
        <location evidence="12">Cell membrane</location>
        <topology evidence="2">Single-pass type I membrane protein</topology>
    </subcellularLocation>
    <subcellularLocation>
        <location evidence="23">Cell projection</location>
        <location evidence="23">Phagocytic cup</location>
    </subcellularLocation>
    <subcellularLocation>
        <location evidence="12">Early endosome</location>
    </subcellularLocation>
    <subcellularLocation>
        <location evidence="21 24">Nucleus</location>
    </subcellularLocation>
    <text evidence="1 12 21">Detected on the surface of CD11c+ peripheral blood mononuclear cells under basal conditions and after activation (PubMed:22509345). No surface expression is observed on resting T cells (PubMed:22509345). Localizes intracellularly in early endosomes in activated T cells of healthy controls and in resting T cells of patients with type I diabetes (PubMed:22509345). Nuclear translocation is enhanced by irradiation, hypoxia and reperfusion injury to brain or kidney (By similarity). Nuclear localization is enhanced by DNA damage in trophoblasts and increases in pre-term labor and preeclampsia placentas compared to control placentas (PubMed:33918759).</text>
</comment>
<comment type="subcellular location">
    <molecule>Isoform 1</molecule>
    <subcellularLocation>
        <location evidence="14 17 20">Cell membrane</location>
        <topology evidence="2">Single-pass type I membrane protein</topology>
    </subcellularLocation>
</comment>
<comment type="subcellular location">
    <molecule>Isoform 2</molecule>
    <subcellularLocation>
        <location>Secreted</location>
    </subcellularLocation>
</comment>
<comment type="subcellular location">
    <molecule>Isoform 10</molecule>
    <subcellularLocation>
        <location evidence="15">Cell membrane</location>
        <topology evidence="15">Single-pass type I membrane protein</topology>
    </subcellularLocation>
</comment>
<comment type="alternative products">
    <event type="alternative splicing"/>
    <isoform>
        <id>Q15109-1</id>
        <name>1</name>
        <sequence type="displayed"/>
    </isoform>
    <isoform>
        <id>Q15109-2</id>
        <name>2</name>
        <name>RAGESEC</name>
        <sequence type="described" ref="VSP_002551 VSP_002552"/>
    </isoform>
    <isoform>
        <id>Q15109-3</id>
        <name>3</name>
        <sequence type="described" ref="VSP_042011"/>
    </isoform>
    <isoform>
        <id>Q15109-4</id>
        <name>4</name>
        <sequence type="described" ref="VSP_043528 VSP_042011"/>
    </isoform>
    <isoform>
        <id>Q15109-5</id>
        <name>5</name>
        <name>del exon3-7</name>
        <sequence type="described" ref="VSP_047884 VSP_047885"/>
    </isoform>
    <isoform>
        <id>Q15109-6</id>
        <name>6</name>
        <sequence type="described" ref="VSP_043528"/>
    </isoform>
    <isoform>
        <id>Q15109-7</id>
        <name>7</name>
        <name>del exon3</name>
        <sequence type="described" ref="VSP_002551"/>
    </isoform>
    <isoform>
        <id>Q15109-8</id>
        <name>8</name>
        <sequence type="described" ref="VSP_047886 VSP_047888"/>
    </isoform>
    <isoform>
        <id>Q15109-9</id>
        <name>9</name>
        <name>del exon8-9</name>
        <sequence type="described" ref="VSP_047887 VSP_047889"/>
    </isoform>
    <isoform>
        <id>Q15109-10</id>
        <name>10</name>
        <name>delta-ICD</name>
        <name>variant 20</name>
        <sequence type="described" ref="VSP_055321"/>
    </isoform>
</comment>
<comment type="tissue specificity">
    <text evidence="21">Endothelial cells. Increased expression in pre-term labor and preeclampsia placentas compared to controls (PubMed:33918759).</text>
</comment>
<comment type="induction">
    <text evidence="12 21">Induced in T cells by antigen stimulation and by the S100B ligand (PubMed:22509345). Induced in trophoblasts by DNA damage (PubMed:33918759).</text>
</comment>
<comment type="PTM">
    <text evidence="1 11">Phosphorylated on its cytoplasmic domain by PKCzeta/PRKCZ upon ligand binding (PubMed:21829704). Phosphorylated by ATM following DNA damage (By similarity).</text>
</comment>
<comment type="PTM">
    <text evidence="18">Targeted by the ubiquitin E3 ligase subunit FBXO10 to mediate its ubiquitination and degradation.</text>
</comment>
<comment type="miscellaneous">
    <molecule>Isoform 10</molecule>
    <text evidence="31">Detected in lung, brain, heart and kidney.</text>
</comment>
<comment type="online information" name="Atlas of Genetics and Cytogenetics in Oncology and Haematology">
    <link uri="https://atlasgeneticsoncology.org/gene/594/AGER"/>
</comment>
<proteinExistence type="evidence at protein level"/>
<feature type="signal peptide" evidence="2">
    <location>
        <begin position="1"/>
        <end position="22"/>
    </location>
</feature>
<feature type="chain" id="PRO_0000014923" description="Advanced glycosylation end product-specific receptor">
    <location>
        <begin position="23"/>
        <end position="404"/>
    </location>
</feature>
<feature type="topological domain" description="Extracellular" evidence="2">
    <location>
        <begin position="23"/>
        <end position="342"/>
    </location>
</feature>
<feature type="transmembrane region" description="Helical" evidence="2">
    <location>
        <begin position="343"/>
        <end position="363"/>
    </location>
</feature>
<feature type="topological domain" description="Cytoplasmic" evidence="2">
    <location>
        <begin position="364"/>
        <end position="404"/>
    </location>
</feature>
<feature type="domain" description="Ig-like V-type">
    <location>
        <begin position="23"/>
        <end position="116"/>
    </location>
</feature>
<feature type="domain" description="Ig-like C2-type 1">
    <location>
        <begin position="124"/>
        <end position="221"/>
    </location>
</feature>
<feature type="domain" description="Ig-like C2-type 2">
    <location>
        <begin position="227"/>
        <end position="317"/>
    </location>
</feature>
<feature type="region of interest" description="Disordered" evidence="3">
    <location>
        <begin position="367"/>
        <end position="404"/>
    </location>
</feature>
<feature type="compositionally biased region" description="Acidic residues" evidence="3">
    <location>
        <begin position="378"/>
        <end position="396"/>
    </location>
</feature>
<feature type="modified residue" description="Phosphoserine; by PKC/PRKCZ and ATM" evidence="11 19">
    <location>
        <position position="391"/>
    </location>
</feature>
<feature type="glycosylation site" description="N-linked (GlcNAc...) asparagine" evidence="2">
    <location>
        <position position="25"/>
    </location>
</feature>
<feature type="glycosylation site" description="N-linked (GlcNAc...) asparagine" evidence="2">
    <location>
        <position position="81"/>
    </location>
</feature>
<feature type="disulfide bond" evidence="7 8 10 25">
    <location>
        <begin position="38"/>
        <end position="99"/>
    </location>
</feature>
<feature type="disulfide bond" evidence="7 8 10 25">
    <location>
        <begin position="144"/>
        <end position="208"/>
    </location>
</feature>
<feature type="disulfide bond" description="Interchain" evidence="13">
    <location>
        <position position="259"/>
    </location>
</feature>
<feature type="disulfide bond" description="Interchain" evidence="13">
    <location>
        <position position="301"/>
    </location>
</feature>
<feature type="splice variant" id="VSP_002551" description="In isoform 2 and isoform 7." evidence="28 30">
    <location>
        <begin position="54"/>
        <end position="67"/>
    </location>
</feature>
<feature type="splice variant" id="VSP_047884" description="In isoform 5." evidence="28">
    <original>YRVRVYQIP</original>
    <variation>WWWSQKVEQ</variation>
    <location>
        <begin position="113"/>
        <end position="121"/>
    </location>
</feature>
<feature type="splice variant" id="VSP_047885" description="In isoform 5." evidence="28">
    <location>
        <begin position="122"/>
        <end position="404"/>
    </location>
</feature>
<feature type="splice variant" id="VSP_043528" description="In isoform 4 and isoform 6." evidence="28">
    <original>K</original>
    <variation>KVVEESRRSRKRPCEQE</variation>
    <location>
        <position position="140"/>
    </location>
</feature>
<feature type="splice variant" id="VSP_002552" description="In isoform 2." evidence="30">
    <original>GVPLPLPPSPVLILPEIGPQDQGTYSCVATHSSHGPQESRAVSISIIEPGEEGPTAGSVGGSGLGTLALALGILGGLGTAALLIGVILWQRRQRRGEERKAPENQEEEEERAELNQSEEPEAGESSTGGP</original>
    <variation>VSDLERGAGRTRRGGANCRLCGRIRAGNSSPGPGDPGRPGDSRPAHWGHLVAKAATPRRGEEGPRKPGGRGGACRTESVGGT</variation>
    <location>
        <begin position="275"/>
        <end position="404"/>
    </location>
</feature>
<feature type="splice variant" id="VSP_047886" description="In isoform 8." evidence="28">
    <original>GVPLPLPPSPVLILPEIGPQDQGTYSCVATHSSHGPQESRAVSISIIEPGE</original>
    <variation>NQARRGQLQVRGLIKSGKQKIAPNTCDWGDGQQERNGRPQKTRRKRRSVQN</variation>
    <location>
        <begin position="275"/>
        <end position="325"/>
    </location>
</feature>
<feature type="splice variant" id="VSP_047887" description="In isoform 9." evidence="28">
    <original>VPLPLPPSPVLILPEIGPQDQGTYSCVATHSSHGPQESRAVSISIIEPGEEGPTAGSVGGSGLGTLALALGILGGLGTAA</original>
    <variation>LRTREPTAVWPPIPATGPRKAVLSASASSNQARRGQLQVRGLIKSGKQKIAPNTCDWGDGQQERNGRPQKTRRKRRSVQN</variation>
    <location>
        <begin position="276"/>
        <end position="355"/>
    </location>
</feature>
<feature type="splice variant" id="VSP_047888" description="In isoform 8." evidence="28">
    <location>
        <begin position="326"/>
        <end position="404"/>
    </location>
</feature>
<feature type="splice variant" id="VSP_042011" description="In isoform 3 and isoform 4." evidence="27 28">
    <original>SVGGSGLGTLALALGILGGLGTAALLIGVILWQRRQRRGEERKAPENQEEEEERAELNQSEEPEAGESSTGGP</original>
    <variation>EGFDKVREAEDSPQHM</variation>
    <location>
        <begin position="332"/>
        <end position="404"/>
    </location>
</feature>
<feature type="splice variant" id="VSP_047889" description="In isoform 9." evidence="28">
    <location>
        <begin position="356"/>
        <end position="404"/>
    </location>
</feature>
<feature type="splice variant" id="VSP_055321" description="In isoform 10." evidence="29">
    <original>KAPENQEEEEERAELNQSEEPEAGESSTGGP</original>
    <variation>PQKTRRKRRSVQN</variation>
    <location>
        <begin position="374"/>
        <end position="404"/>
    </location>
</feature>
<feature type="sequence variant" id="VAR_024500" description="In dbSNP:rs2070600." evidence="4">
    <original>G</original>
    <variation>S</variation>
    <location>
        <position position="82"/>
    </location>
</feature>
<feature type="sequence variant" id="VAR_011338" evidence="26">
    <original>Q</original>
    <variation>R</variation>
    <location>
        <position position="100"/>
    </location>
</feature>
<feature type="mutagenesis site" description="Less monoubiquitinated product and resistant to degradation." evidence="18">
    <original>K</original>
    <variation>R</variation>
    <location>
        <position position="374"/>
    </location>
</feature>
<feature type="mutagenesis site" description="Complete loss of phosphorylation by PKC/PRKCZ and by ATM." evidence="11 19">
    <original>S</original>
    <variation>A</variation>
    <location>
        <position position="391"/>
    </location>
</feature>
<feature type="sequence conflict" description="In Ref. 1; AAA03574." evidence="31" ref="1">
    <original>M</original>
    <variation>G</variation>
    <location>
        <position position="1"/>
    </location>
</feature>
<feature type="strand" evidence="38">
    <location>
        <begin position="24"/>
        <end position="29"/>
    </location>
</feature>
<feature type="strand" evidence="38">
    <location>
        <begin position="34"/>
        <end position="36"/>
    </location>
</feature>
<feature type="strand" evidence="38">
    <location>
        <begin position="43"/>
        <end position="46"/>
    </location>
</feature>
<feature type="strand" evidence="38">
    <location>
        <begin position="48"/>
        <end position="55"/>
    </location>
</feature>
<feature type="strand" evidence="38">
    <location>
        <begin position="58"/>
        <end position="60"/>
    </location>
</feature>
<feature type="strand" evidence="42">
    <location>
        <begin position="62"/>
        <end position="64"/>
    </location>
</feature>
<feature type="helix" evidence="38">
    <location>
        <begin position="71"/>
        <end position="74"/>
    </location>
</feature>
<feature type="strand" evidence="38">
    <location>
        <begin position="76"/>
        <end position="78"/>
    </location>
</feature>
<feature type="turn" evidence="34">
    <location>
        <begin position="80"/>
        <end position="82"/>
    </location>
</feature>
<feature type="strand" evidence="38">
    <location>
        <begin position="84"/>
        <end position="88"/>
    </location>
</feature>
<feature type="helix" evidence="38">
    <location>
        <begin position="91"/>
        <end position="93"/>
    </location>
</feature>
<feature type="strand" evidence="38">
    <location>
        <begin position="95"/>
        <end position="102"/>
    </location>
</feature>
<feature type="turn" evidence="39">
    <location>
        <begin position="104"/>
        <end position="106"/>
    </location>
</feature>
<feature type="strand" evidence="38">
    <location>
        <begin position="108"/>
        <end position="119"/>
    </location>
</feature>
<feature type="strand" evidence="38">
    <location>
        <begin position="125"/>
        <end position="128"/>
    </location>
</feature>
<feature type="strand" evidence="38">
    <location>
        <begin position="131"/>
        <end position="133"/>
    </location>
</feature>
<feature type="strand" evidence="38">
    <location>
        <begin position="139"/>
        <end position="151"/>
    </location>
</feature>
<feature type="strand" evidence="38">
    <location>
        <begin position="154"/>
        <end position="159"/>
    </location>
</feature>
<feature type="strand" evidence="42">
    <location>
        <begin position="162"/>
        <end position="164"/>
    </location>
</feature>
<feature type="turn" evidence="43">
    <location>
        <begin position="166"/>
        <end position="169"/>
    </location>
</feature>
<feature type="strand" evidence="38">
    <location>
        <begin position="171"/>
        <end position="179"/>
    </location>
</feature>
<feature type="turn" evidence="38">
    <location>
        <begin position="181"/>
        <end position="183"/>
    </location>
</feature>
<feature type="strand" evidence="38">
    <location>
        <begin position="186"/>
        <end position="194"/>
    </location>
</feature>
<feature type="strand" evidence="38">
    <location>
        <begin position="206"/>
        <end position="211"/>
    </location>
</feature>
<feature type="strand" evidence="37">
    <location>
        <begin position="213"/>
        <end position="216"/>
    </location>
</feature>
<feature type="strand" evidence="42">
    <location>
        <begin position="228"/>
        <end position="230"/>
    </location>
</feature>
<feature type="strand" evidence="40">
    <location>
        <begin position="237"/>
        <end position="244"/>
    </location>
</feature>
<feature type="strand" evidence="40">
    <location>
        <begin position="247"/>
        <end position="249"/>
    </location>
</feature>
<feature type="strand" evidence="40">
    <location>
        <begin position="251"/>
        <end position="253"/>
    </location>
</feature>
<feature type="strand" evidence="40">
    <location>
        <begin position="255"/>
        <end position="260"/>
    </location>
</feature>
<feature type="strand" evidence="35">
    <location>
        <begin position="262"/>
        <end position="264"/>
    </location>
</feature>
<feature type="strand" evidence="40">
    <location>
        <begin position="268"/>
        <end position="273"/>
    </location>
</feature>
<feature type="strand" evidence="40">
    <location>
        <begin position="284"/>
        <end position="288"/>
    </location>
</feature>
<feature type="helix" evidence="40">
    <location>
        <begin position="293"/>
        <end position="295"/>
    </location>
</feature>
<feature type="strand" evidence="40">
    <location>
        <begin position="297"/>
        <end position="305"/>
    </location>
</feature>
<feature type="strand" evidence="40">
    <location>
        <begin position="308"/>
        <end position="312"/>
    </location>
</feature>
<feature type="strand" evidence="40">
    <location>
        <begin position="316"/>
        <end position="320"/>
    </location>
</feature>
<feature type="strand" evidence="35">
    <location>
        <begin position="322"/>
        <end position="324"/>
    </location>
</feature>
<feature type="strand" evidence="36">
    <location>
        <begin position="364"/>
        <end position="366"/>
    </location>
</feature>
<feature type="turn" evidence="36">
    <location>
        <begin position="367"/>
        <end position="369"/>
    </location>
</feature>
<feature type="strand" evidence="41">
    <location>
        <begin position="371"/>
        <end position="373"/>
    </location>
</feature>
<gene>
    <name type="primary">AGER</name>
    <name type="synonym">RAGE</name>
</gene>
<keyword id="KW-0002">3D-structure</keyword>
<keyword id="KW-0025">Alternative splicing</keyword>
<keyword id="KW-1003">Cell membrane</keyword>
<keyword id="KW-0966">Cell projection</keyword>
<keyword id="KW-1015">Disulfide bond</keyword>
<keyword id="KW-0227">DNA damage</keyword>
<keyword id="KW-0234">DNA repair</keyword>
<keyword id="KW-0235">DNA replication</keyword>
<keyword id="KW-0238">DNA-binding</keyword>
<keyword id="KW-0967">Endosome</keyword>
<keyword id="KW-0325">Glycoprotein</keyword>
<keyword id="KW-0393">Immunoglobulin domain</keyword>
<keyword id="KW-0395">Inflammatory response</keyword>
<keyword id="KW-0472">Membrane</keyword>
<keyword id="KW-0539">Nucleus</keyword>
<keyword id="KW-0581">Phagocytosis</keyword>
<keyword id="KW-0597">Phosphoprotein</keyword>
<keyword id="KW-1267">Proteomics identification</keyword>
<keyword id="KW-0675">Receptor</keyword>
<keyword id="KW-1185">Reference proteome</keyword>
<keyword id="KW-0677">Repeat</keyword>
<keyword id="KW-0694">RNA-binding</keyword>
<keyword id="KW-0964">Secreted</keyword>
<keyword id="KW-0732">Signal</keyword>
<keyword id="KW-0812">Transmembrane</keyword>
<keyword id="KW-1133">Transmembrane helix</keyword>
<keyword id="KW-0832">Ubl conjugation</keyword>
<organism>
    <name type="scientific">Homo sapiens</name>
    <name type="common">Human</name>
    <dbReference type="NCBI Taxonomy" id="9606"/>
    <lineage>
        <taxon>Eukaryota</taxon>
        <taxon>Metazoa</taxon>
        <taxon>Chordata</taxon>
        <taxon>Craniata</taxon>
        <taxon>Vertebrata</taxon>
        <taxon>Euteleostomi</taxon>
        <taxon>Mammalia</taxon>
        <taxon>Eutheria</taxon>
        <taxon>Euarchontoglires</taxon>
        <taxon>Primates</taxon>
        <taxon>Haplorrhini</taxon>
        <taxon>Catarrhini</taxon>
        <taxon>Hominidae</taxon>
        <taxon>Homo</taxon>
    </lineage>
</organism>
<dbReference type="EMBL" id="M91211">
    <property type="protein sequence ID" value="AAA03574.1"/>
    <property type="molecule type" value="mRNA"/>
</dbReference>
<dbReference type="EMBL" id="D28769">
    <property type="protein sequence ID" value="BAA05958.1"/>
    <property type="molecule type" value="Genomic_DNA"/>
</dbReference>
<dbReference type="EMBL" id="AB036432">
    <property type="protein sequence ID" value="BAA89369.1"/>
    <property type="molecule type" value="mRNA"/>
</dbReference>
<dbReference type="EMBL" id="AJ133822">
    <property type="protein sequence ID" value="CAB43108.1"/>
    <property type="molecule type" value="mRNA"/>
</dbReference>
<dbReference type="EMBL" id="AB061668">
    <property type="protein sequence ID" value="BAC65465.1"/>
    <property type="molecule type" value="mRNA"/>
</dbReference>
<dbReference type="EMBL" id="U89336">
    <property type="protein sequence ID" value="AAB47491.1"/>
    <property type="molecule type" value="Genomic_DNA"/>
</dbReference>
<dbReference type="EMBL" id="AY755619">
    <property type="protein sequence ID" value="AAX07272.1"/>
    <property type="molecule type" value="mRNA"/>
</dbReference>
<dbReference type="EMBL" id="AY755620">
    <property type="protein sequence ID" value="AAX07273.1"/>
    <property type="molecule type" value="mRNA"/>
</dbReference>
<dbReference type="EMBL" id="AY755621">
    <property type="protein sequence ID" value="AAX07274.1"/>
    <property type="molecule type" value="mRNA"/>
</dbReference>
<dbReference type="EMBL" id="AY755622">
    <property type="protein sequence ID" value="AAX07275.1"/>
    <property type="molecule type" value="mRNA"/>
</dbReference>
<dbReference type="EMBL" id="AY755623">
    <property type="protein sequence ID" value="AAX07276.1"/>
    <property type="molecule type" value="mRNA"/>
</dbReference>
<dbReference type="EMBL" id="AY755624">
    <property type="protein sequence ID" value="AAX07277.1"/>
    <property type="molecule type" value="mRNA"/>
</dbReference>
<dbReference type="EMBL" id="AY755625">
    <property type="protein sequence ID" value="AAX07278.1"/>
    <property type="molecule type" value="mRNA"/>
</dbReference>
<dbReference type="EMBL" id="AY755628">
    <property type="protein sequence ID" value="AAX07281.1"/>
    <property type="molecule type" value="mRNA"/>
</dbReference>
<dbReference type="EMBL" id="DQ104252">
    <property type="protein sequence ID" value="AAZ32413.1"/>
    <property type="molecule type" value="mRNA"/>
</dbReference>
<dbReference type="EMBL" id="EU117141">
    <property type="protein sequence ID" value="ABV03807.1"/>
    <property type="molecule type" value="mRNA"/>
</dbReference>
<dbReference type="EMBL" id="KC692917">
    <property type="protein sequence ID" value="AHB30241.1"/>
    <property type="molecule type" value="mRNA"/>
</dbReference>
<dbReference type="EMBL" id="AK313178">
    <property type="protein sequence ID" value="BAG35995.1"/>
    <property type="molecule type" value="mRNA"/>
</dbReference>
<dbReference type="EMBL" id="AL662830">
    <property type="status" value="NOT_ANNOTATED_CDS"/>
    <property type="molecule type" value="Genomic_DNA"/>
</dbReference>
<dbReference type="EMBL" id="AL662884">
    <property type="status" value="NOT_ANNOTATED_CDS"/>
    <property type="molecule type" value="Genomic_DNA"/>
</dbReference>
<dbReference type="EMBL" id="AL845464">
    <property type="status" value="NOT_ANNOTATED_CDS"/>
    <property type="molecule type" value="Genomic_DNA"/>
</dbReference>
<dbReference type="EMBL" id="BX284686">
    <property type="status" value="NOT_ANNOTATED_CDS"/>
    <property type="molecule type" value="Genomic_DNA"/>
</dbReference>
<dbReference type="EMBL" id="BX927239">
    <property type="status" value="NOT_ANNOTATED_CDS"/>
    <property type="molecule type" value="Genomic_DNA"/>
</dbReference>
<dbReference type="EMBL" id="CR812478">
    <property type="status" value="NOT_ANNOTATED_CDS"/>
    <property type="molecule type" value="Genomic_DNA"/>
</dbReference>
<dbReference type="EMBL" id="CR933878">
    <property type="status" value="NOT_ANNOTATED_CDS"/>
    <property type="molecule type" value="Genomic_DNA"/>
</dbReference>
<dbReference type="EMBL" id="CH471081">
    <property type="protein sequence ID" value="EAX03610.1"/>
    <property type="molecule type" value="Genomic_DNA"/>
</dbReference>
<dbReference type="EMBL" id="CH471081">
    <property type="protein sequence ID" value="EAX03611.1"/>
    <property type="molecule type" value="Genomic_DNA"/>
</dbReference>
<dbReference type="EMBL" id="BC020669">
    <property type="protein sequence ID" value="AAH20669.1"/>
    <property type="molecule type" value="mRNA"/>
</dbReference>
<dbReference type="EMBL" id="AF208289">
    <property type="protein sequence ID" value="AAG35728.1"/>
    <property type="molecule type" value="Genomic_DNA"/>
</dbReference>
<dbReference type="CCDS" id="CCDS4746.1">
    <molecule id="Q15109-1"/>
</dbReference>
<dbReference type="CCDS" id="CCDS4747.1">
    <molecule id="Q15109-2"/>
</dbReference>
<dbReference type="CCDS" id="CCDS56417.1">
    <molecule id="Q15109-4"/>
</dbReference>
<dbReference type="CCDS" id="CCDS56418.1">
    <molecule id="Q15109-3"/>
</dbReference>
<dbReference type="CCDS" id="CCDS75429.1">
    <molecule id="Q15109-6"/>
</dbReference>
<dbReference type="PIR" id="I61596">
    <property type="entry name" value="I61596"/>
</dbReference>
<dbReference type="RefSeq" id="NP_001127.1">
    <molecule id="Q15109-1"/>
    <property type="nucleotide sequence ID" value="NM_001136.5"/>
</dbReference>
<dbReference type="RefSeq" id="NP_001193858.1">
    <molecule id="Q15109-6"/>
    <property type="nucleotide sequence ID" value="NM_001206929.2"/>
</dbReference>
<dbReference type="RefSeq" id="NP_001193861.1">
    <molecule id="Q15109-7"/>
    <property type="nucleotide sequence ID" value="NM_001206932.2"/>
</dbReference>
<dbReference type="RefSeq" id="NP_001193863.1">
    <molecule id="Q15109-4"/>
    <property type="nucleotide sequence ID" value="NM_001206934.2"/>
</dbReference>
<dbReference type="RefSeq" id="NP_001193865.1">
    <molecule id="Q15109-9"/>
    <property type="nucleotide sequence ID" value="NM_001206936.2"/>
</dbReference>
<dbReference type="RefSeq" id="NP_001193869.1">
    <molecule id="Q15109-3"/>
    <property type="nucleotide sequence ID" value="NM_001206940.2"/>
</dbReference>
<dbReference type="RefSeq" id="NP_001193883.1">
    <molecule id="Q15109-8"/>
    <property type="nucleotide sequence ID" value="NM_001206954.2"/>
</dbReference>
<dbReference type="RefSeq" id="NP_001193895.1">
    <molecule id="Q15109-3"/>
    <property type="nucleotide sequence ID" value="NM_001206966.2"/>
</dbReference>
<dbReference type="RefSeq" id="NP_751947.1">
    <molecule id="Q15109-2"/>
    <property type="nucleotide sequence ID" value="NM_172197.3"/>
</dbReference>
<dbReference type="PDB" id="2E5E">
    <property type="method" value="NMR"/>
    <property type="chains" value="A=23-121"/>
</dbReference>
<dbReference type="PDB" id="2ENS">
    <property type="method" value="NMR"/>
    <property type="chains" value="A=235-323"/>
</dbReference>
<dbReference type="PDB" id="2L7U">
    <property type="method" value="NMR"/>
    <property type="chains" value="A=23-125"/>
</dbReference>
<dbReference type="PDB" id="2LE9">
    <property type="method" value="NMR"/>
    <property type="chains" value="A/D=235-327"/>
</dbReference>
<dbReference type="PDB" id="2LMB">
    <property type="method" value="NMR"/>
    <property type="chains" value="A=363-404"/>
</dbReference>
<dbReference type="PDB" id="2M1K">
    <property type="method" value="NMR"/>
    <property type="chains" value="A/C=23-121"/>
</dbReference>
<dbReference type="PDB" id="2MJW">
    <property type="method" value="NMR"/>
    <property type="chains" value="A/C=23-121"/>
</dbReference>
<dbReference type="PDB" id="2MOV">
    <property type="method" value="NMR"/>
    <property type="chains" value="A=23-125"/>
</dbReference>
<dbReference type="PDB" id="3CJJ">
    <property type="method" value="X-ray"/>
    <property type="resolution" value="1.85 A"/>
    <property type="chains" value="A=23-240"/>
</dbReference>
<dbReference type="PDB" id="3O3U">
    <property type="method" value="X-ray"/>
    <property type="resolution" value="1.50 A"/>
    <property type="chains" value="N=23-231"/>
</dbReference>
<dbReference type="PDB" id="4LP4">
    <property type="method" value="X-ray"/>
    <property type="resolution" value="2.40 A"/>
    <property type="chains" value="A/B=23-231"/>
</dbReference>
<dbReference type="PDB" id="4LP5">
    <property type="method" value="X-ray"/>
    <property type="resolution" value="3.80 A"/>
    <property type="chains" value="A/B=23-323"/>
</dbReference>
<dbReference type="PDB" id="4OF5">
    <property type="method" value="X-ray"/>
    <property type="resolution" value="2.80 A"/>
    <property type="chains" value="A/B=23-237"/>
</dbReference>
<dbReference type="PDB" id="4OFV">
    <property type="method" value="X-ray"/>
    <property type="resolution" value="3.10 A"/>
    <property type="chains" value="A/B=23-235"/>
</dbReference>
<dbReference type="PDB" id="4OI7">
    <property type="method" value="X-ray"/>
    <property type="resolution" value="3.10 A"/>
    <property type="chains" value="A/B=23-237"/>
</dbReference>
<dbReference type="PDB" id="4OI8">
    <property type="method" value="X-ray"/>
    <property type="resolution" value="3.10 A"/>
    <property type="chains" value="A/B=23-237"/>
</dbReference>
<dbReference type="PDB" id="4P2Y">
    <property type="method" value="X-ray"/>
    <property type="resolution" value="2.30 A"/>
    <property type="chains" value="A=23-323"/>
</dbReference>
<dbReference type="PDB" id="4XYN">
    <property type="method" value="X-ray"/>
    <property type="resolution" value="2.55 A"/>
    <property type="chains" value="P=54-68"/>
</dbReference>
<dbReference type="PDB" id="4YBH">
    <property type="method" value="X-ray"/>
    <property type="resolution" value="2.40 A"/>
    <property type="chains" value="A=23-323"/>
</dbReference>
<dbReference type="PDB" id="5D7F">
    <property type="method" value="X-ray"/>
    <property type="resolution" value="1.30 A"/>
    <property type="chains" value="P=65-79"/>
</dbReference>
<dbReference type="PDB" id="6VXG">
    <property type="method" value="NMR"/>
    <property type="chains" value="A=362-404"/>
</dbReference>
<dbReference type="PDB" id="6XQ1">
    <property type="method" value="X-ray"/>
    <property type="resolution" value="1.51 A"/>
    <property type="chains" value="A/B=23-231"/>
</dbReference>
<dbReference type="PDB" id="6XQ3">
    <property type="method" value="X-ray"/>
    <property type="resolution" value="1.71 A"/>
    <property type="chains" value="A/B=23-231"/>
</dbReference>
<dbReference type="PDB" id="6XQ5">
    <property type="method" value="X-ray"/>
    <property type="resolution" value="1.80 A"/>
    <property type="chains" value="A/B=23-231"/>
</dbReference>
<dbReference type="PDB" id="6XQ6">
    <property type="method" value="X-ray"/>
    <property type="resolution" value="1.90 A"/>
    <property type="chains" value="A/B=23-231"/>
</dbReference>
<dbReference type="PDB" id="6XQ7">
    <property type="method" value="X-ray"/>
    <property type="resolution" value="1.80 A"/>
    <property type="chains" value="A/B=23-231"/>
</dbReference>
<dbReference type="PDB" id="6XQ8">
    <property type="method" value="X-ray"/>
    <property type="resolution" value="1.82 A"/>
    <property type="chains" value="A/B=23-231"/>
</dbReference>
<dbReference type="PDB" id="6XQ9">
    <property type="method" value="X-ray"/>
    <property type="resolution" value="2.30 A"/>
    <property type="chains" value="A/B=23-231"/>
</dbReference>
<dbReference type="PDB" id="7LML">
    <property type="method" value="X-ray"/>
    <property type="resolution" value="2.15 A"/>
    <property type="chains" value="A/B=23-231"/>
</dbReference>
<dbReference type="PDB" id="7LMW">
    <property type="method" value="X-ray"/>
    <property type="resolution" value="2.50 A"/>
    <property type="chains" value="A/B=23-231"/>
</dbReference>
<dbReference type="PDB" id="8I9M">
    <property type="method" value="EM"/>
    <property type="resolution" value="5.19 A"/>
    <property type="chains" value="B=23-233"/>
</dbReference>
<dbReference type="PDBsum" id="2E5E"/>
<dbReference type="PDBsum" id="2ENS"/>
<dbReference type="PDBsum" id="2L7U"/>
<dbReference type="PDBsum" id="2LE9"/>
<dbReference type="PDBsum" id="2LMB"/>
<dbReference type="PDBsum" id="2M1K"/>
<dbReference type="PDBsum" id="2MJW"/>
<dbReference type="PDBsum" id="2MOV"/>
<dbReference type="PDBsum" id="3CJJ"/>
<dbReference type="PDBsum" id="3O3U"/>
<dbReference type="PDBsum" id="4LP4"/>
<dbReference type="PDBsum" id="4LP5"/>
<dbReference type="PDBsum" id="4OF5"/>
<dbReference type="PDBsum" id="4OFV"/>
<dbReference type="PDBsum" id="4OI7"/>
<dbReference type="PDBsum" id="4OI8"/>
<dbReference type="PDBsum" id="4P2Y"/>
<dbReference type="PDBsum" id="4XYN"/>
<dbReference type="PDBsum" id="4YBH"/>
<dbReference type="PDBsum" id="5D7F"/>
<dbReference type="PDBsum" id="6VXG"/>
<dbReference type="PDBsum" id="6XQ1"/>
<dbReference type="PDBsum" id="6XQ3"/>
<dbReference type="PDBsum" id="6XQ5"/>
<dbReference type="PDBsum" id="6XQ6"/>
<dbReference type="PDBsum" id="6XQ7"/>
<dbReference type="PDBsum" id="6XQ8"/>
<dbReference type="PDBsum" id="6XQ9"/>
<dbReference type="PDBsum" id="7LML"/>
<dbReference type="PDBsum" id="7LMW"/>
<dbReference type="PDBsum" id="8I9M"/>
<dbReference type="BMRB" id="Q15109"/>
<dbReference type="EMDB" id="EMD-35276"/>
<dbReference type="SMR" id="Q15109"/>
<dbReference type="BioGRID" id="106685">
    <property type="interactions" value="19"/>
</dbReference>
<dbReference type="DIP" id="DIP-40658N"/>
<dbReference type="FunCoup" id="Q15109">
    <property type="interactions" value="22"/>
</dbReference>
<dbReference type="IntAct" id="Q15109">
    <property type="interactions" value="30"/>
</dbReference>
<dbReference type="MINT" id="Q15109"/>
<dbReference type="STRING" id="9606.ENSP00000364210"/>
<dbReference type="BindingDB" id="Q15109"/>
<dbReference type="ChEMBL" id="CHEMBL2176846"/>
<dbReference type="DrugBank" id="DB12689">
    <property type="generic name" value="Azeliragon"/>
</dbReference>
<dbReference type="DrugBank" id="DB00107">
    <property type="generic name" value="Oxytocin"/>
</dbReference>
<dbReference type="DrugBank" id="DB11673">
    <property type="generic name" value="Pyridoxamine"/>
</dbReference>
<dbReference type="GuidetoPHARMACOLOGY" id="2843"/>
<dbReference type="TCDB" id="8.A.23.1.19">
    <property type="family name" value="the basigin (basigin) family"/>
</dbReference>
<dbReference type="GlyCosmos" id="Q15109">
    <property type="glycosylation" value="2 sites, No reported glycans"/>
</dbReference>
<dbReference type="GlyGen" id="Q15109">
    <property type="glycosylation" value="3 sites"/>
</dbReference>
<dbReference type="iPTMnet" id="Q15109"/>
<dbReference type="PhosphoSitePlus" id="Q15109"/>
<dbReference type="BioMuta" id="AGER"/>
<dbReference type="DMDM" id="2497317"/>
<dbReference type="MassIVE" id="Q15109"/>
<dbReference type="PaxDb" id="9606-ENSP00000364210"/>
<dbReference type="PeptideAtlas" id="Q15109"/>
<dbReference type="ProteomicsDB" id="60436">
    <molecule id="Q15109-1"/>
</dbReference>
<dbReference type="ProteomicsDB" id="60437">
    <molecule id="Q15109-2"/>
</dbReference>
<dbReference type="ProteomicsDB" id="60438">
    <molecule id="Q15109-3"/>
</dbReference>
<dbReference type="ProteomicsDB" id="60439">
    <molecule id="Q15109-4"/>
</dbReference>
<dbReference type="ProteomicsDB" id="61748"/>
<dbReference type="Antibodypedia" id="28483">
    <property type="antibodies" value="863 antibodies from 46 providers"/>
</dbReference>
<dbReference type="DNASU" id="177"/>
<dbReference type="Ensembl" id="ENST00000375055.6">
    <molecule id="Q15109-3"/>
    <property type="protein sequence ID" value="ENSP00000364195.2"/>
    <property type="gene ID" value="ENSG00000204305.16"/>
</dbReference>
<dbReference type="Ensembl" id="ENST00000375067.7">
    <molecule id="Q15109-2"/>
    <property type="protein sequence ID" value="ENSP00000364208.3"/>
    <property type="gene ID" value="ENSG00000204305.16"/>
</dbReference>
<dbReference type="Ensembl" id="ENST00000375069.7">
    <molecule id="Q15109-6"/>
    <property type="protein sequence ID" value="ENSP00000364210.4"/>
    <property type="gene ID" value="ENSG00000204305.16"/>
</dbReference>
<dbReference type="Ensembl" id="ENST00000375076.9">
    <molecule id="Q15109-1"/>
    <property type="protein sequence ID" value="ENSP00000364217.4"/>
    <property type="gene ID" value="ENSG00000204305.16"/>
</dbReference>
<dbReference type="Ensembl" id="ENST00000383275.6">
    <molecule id="Q15109-3"/>
    <property type="protein sequence ID" value="ENSP00000372762.2"/>
    <property type="gene ID" value="ENSG00000206320.12"/>
</dbReference>
<dbReference type="Ensembl" id="ENST00000383279.8">
    <molecule id="Q15109-2"/>
    <property type="protein sequence ID" value="ENSP00000372766.4"/>
    <property type="gene ID" value="ENSG00000206320.12"/>
</dbReference>
<dbReference type="Ensembl" id="ENST00000412470.6">
    <molecule id="Q15109-2"/>
    <property type="protein sequence ID" value="ENSP00000387853.2"/>
    <property type="gene ID" value="ENSG00000229058.10"/>
</dbReference>
<dbReference type="Ensembl" id="ENST00000426138.6">
    <property type="protein sequence ID" value="ENSP00000415144.2"/>
    <property type="gene ID" value="ENSG00000230514.11"/>
</dbReference>
<dbReference type="Ensembl" id="ENST00000427822.6">
    <property type="protein sequence ID" value="ENSP00000416042.2"/>
    <property type="gene ID" value="ENSG00000231268.9"/>
</dbReference>
<dbReference type="Ensembl" id="ENST00000432831.5">
    <molecule id="Q15109-3"/>
    <property type="protein sequence ID" value="ENSP00000413391.1"/>
    <property type="gene ID" value="ENSG00000237405.10"/>
</dbReference>
<dbReference type="Ensembl" id="ENST00000436456.6">
    <molecule id="Q15109-1"/>
    <property type="protein sequence ID" value="ENSP00000397227.2"/>
    <property type="gene ID" value="ENSG00000234729.9"/>
</dbReference>
<dbReference type="Ensembl" id="ENST00000438221.6">
    <molecule id="Q15109-4"/>
    <property type="protein sequence ID" value="ENSP00000387887.2"/>
    <property type="gene ID" value="ENSG00000204305.16"/>
</dbReference>
<dbReference type="Ensembl" id="ENST00000441180.6">
    <molecule id="Q15109-2"/>
    <property type="protein sequence ID" value="ENSP00000388462.2"/>
    <property type="gene ID" value="ENSG00000234729.9"/>
</dbReference>
<dbReference type="Ensembl" id="ENST00000441804.6">
    <molecule id="Q15109-2"/>
    <property type="protein sequence ID" value="ENSP00000391743.2"/>
    <property type="gene ID" value="ENSG00000237405.10"/>
</dbReference>
<dbReference type="Ensembl" id="ENST00000447921.6">
    <molecule id="Q15109-1"/>
    <property type="protein sequence ID" value="ENSP00000395812.2"/>
    <property type="gene ID" value="ENSG00000237405.10"/>
</dbReference>
<dbReference type="Ensembl" id="ENST00000449037.5">
    <molecule id="Q15109-3"/>
    <property type="protein sequence ID" value="ENSP00000400667.1"/>
    <property type="gene ID" value="ENSG00000229058.10"/>
</dbReference>
<dbReference type="Ensembl" id="ENST00000451115.6">
    <molecule id="Q15109-1"/>
    <property type="protein sequence ID" value="ENSP00000401068.2"/>
    <property type="gene ID" value="ENSG00000206320.12"/>
</dbReference>
<dbReference type="Ensembl" id="ENST00000453588.5">
    <molecule id="Q15109-3"/>
    <property type="protein sequence ID" value="ENSP00000399686.1"/>
    <property type="gene ID" value="ENSG00000234729.9"/>
</dbReference>
<dbReference type="Ensembl" id="ENST00000456918.6">
    <molecule id="Q15109-1"/>
    <property type="protein sequence ID" value="ENSP00000409457.2"/>
    <property type="gene ID" value="ENSG00000229058.10"/>
</dbReference>
<dbReference type="Ensembl" id="ENST00000547328.5">
    <molecule id="Q15109-6"/>
    <property type="protein sequence ID" value="ENSP00000448579.2"/>
    <property type="gene ID" value="ENSG00000206320.12"/>
</dbReference>
<dbReference type="Ensembl" id="ENST00000547651.2">
    <molecule id="Q15109-4"/>
    <property type="protein sequence ID" value="ENSP00000449708.1"/>
    <property type="gene ID" value="ENSG00000229058.10"/>
</dbReference>
<dbReference type="Ensembl" id="ENST00000548464.3">
    <molecule id="Q15109-6"/>
    <property type="protein sequence ID" value="ENSP00000450134.2"/>
    <property type="gene ID" value="ENSG00000234729.9"/>
</dbReference>
<dbReference type="Ensembl" id="ENST00000549758.5">
    <molecule id="Q15109-6"/>
    <property type="protein sequence ID" value="ENSP00000447301.2"/>
    <property type="gene ID" value="ENSG00000229058.10"/>
</dbReference>
<dbReference type="Ensembl" id="ENST00000550562.5">
    <molecule id="Q15109-4"/>
    <property type="protein sequence ID" value="ENSP00000446835.1"/>
    <property type="gene ID" value="ENSG00000234729.9"/>
</dbReference>
<dbReference type="Ensembl" id="ENST00000551254.5">
    <molecule id="Q15109-4"/>
    <property type="protein sequence ID" value="ENSP00000449226.1"/>
    <property type="gene ID" value="ENSG00000206320.12"/>
</dbReference>
<dbReference type="Ensembl" id="ENST00000551381.5">
    <molecule id="Q15109-6"/>
    <property type="protein sequence ID" value="ENSP00000448979.2"/>
    <property type="gene ID" value="ENSG00000237405.10"/>
</dbReference>
<dbReference type="Ensembl" id="ENST00000551827.4">
    <molecule id="Q15109-4"/>
    <property type="protein sequence ID" value="ENSP00000449042.1"/>
    <property type="gene ID" value="ENSG00000237405.10"/>
</dbReference>
<dbReference type="GeneID" id="177"/>
<dbReference type="KEGG" id="hsa:177"/>
<dbReference type="MANE-Select" id="ENST00000375076.9">
    <property type="protein sequence ID" value="ENSP00000364217.4"/>
    <property type="RefSeq nucleotide sequence ID" value="NM_001136.5"/>
    <property type="RefSeq protein sequence ID" value="NP_001127.1"/>
</dbReference>
<dbReference type="UCSC" id="uc003oal.3">
    <molecule id="Q15109-1"/>
    <property type="organism name" value="human"/>
</dbReference>
<dbReference type="AGR" id="HGNC:320"/>
<dbReference type="CTD" id="177"/>
<dbReference type="DisGeNET" id="177"/>
<dbReference type="GeneCards" id="AGER"/>
<dbReference type="HGNC" id="HGNC:320">
    <property type="gene designation" value="AGER"/>
</dbReference>
<dbReference type="HPA" id="ENSG00000204305">
    <property type="expression patterns" value="Tissue enriched (lung)"/>
</dbReference>
<dbReference type="MIM" id="600214">
    <property type="type" value="gene"/>
</dbReference>
<dbReference type="neXtProt" id="NX_Q15109"/>
<dbReference type="OpenTargets" id="ENSG00000204305"/>
<dbReference type="PharmGKB" id="PA24617"/>
<dbReference type="VEuPathDB" id="HostDB:ENSG00000204305"/>
<dbReference type="eggNOG" id="ENOG502SQ8N">
    <property type="taxonomic scope" value="Eukaryota"/>
</dbReference>
<dbReference type="GeneTree" id="ENSGT00890000139566"/>
<dbReference type="HOGENOM" id="CLU_051851_0_1_1"/>
<dbReference type="InParanoid" id="Q15109"/>
<dbReference type="OMA" id="VAMHPSH"/>
<dbReference type="OrthoDB" id="10055806at2759"/>
<dbReference type="PAN-GO" id="Q15109">
    <property type="GO annotations" value="4 GO annotations based on evolutionary models"/>
</dbReference>
<dbReference type="PhylomeDB" id="Q15109"/>
<dbReference type="TreeFam" id="TF337155"/>
<dbReference type="PathwayCommons" id="Q15109"/>
<dbReference type="Reactome" id="R-HSA-445989">
    <property type="pathway name" value="TAK1-dependent IKK and NF-kappa-B activation"/>
</dbReference>
<dbReference type="Reactome" id="R-HSA-879415">
    <property type="pathway name" value="Advanced glycosylation endproduct receptor signaling"/>
</dbReference>
<dbReference type="Reactome" id="R-HSA-933542">
    <property type="pathway name" value="TRAF6 mediated NF-kB activation"/>
</dbReference>
<dbReference type="SignaLink" id="Q15109"/>
<dbReference type="SIGNOR" id="Q15109"/>
<dbReference type="BioGRID-ORCS" id="177">
    <property type="hits" value="12 hits in 1153 CRISPR screens"/>
</dbReference>
<dbReference type="ChiTaRS" id="AGER">
    <property type="organism name" value="human"/>
</dbReference>
<dbReference type="EvolutionaryTrace" id="Q15109"/>
<dbReference type="GeneWiki" id="RAGE_(receptor)"/>
<dbReference type="GenomeRNAi" id="177"/>
<dbReference type="Pharos" id="Q15109">
    <property type="development level" value="Tchem"/>
</dbReference>
<dbReference type="PRO" id="PR:Q15109"/>
<dbReference type="Proteomes" id="UP000005640">
    <property type="component" value="Chromosome 6"/>
</dbReference>
<dbReference type="RNAct" id="Q15109">
    <property type="molecule type" value="protein"/>
</dbReference>
<dbReference type="Bgee" id="ENSG00000204305">
    <property type="expression patterns" value="Expressed in right lung and 95 other cell types or tissues"/>
</dbReference>
<dbReference type="ExpressionAtlas" id="Q15109">
    <property type="expression patterns" value="baseline and differential"/>
</dbReference>
<dbReference type="GO" id="GO:0016324">
    <property type="term" value="C:apical plasma membrane"/>
    <property type="evidence" value="ECO:0000314"/>
    <property type="project" value="ARUK-UCL"/>
</dbReference>
<dbReference type="GO" id="GO:0030054">
    <property type="term" value="C:cell junction"/>
    <property type="evidence" value="ECO:0000314"/>
    <property type="project" value="HPA"/>
</dbReference>
<dbReference type="GO" id="GO:0009986">
    <property type="term" value="C:cell surface"/>
    <property type="evidence" value="ECO:0000314"/>
    <property type="project" value="UniProtKB"/>
</dbReference>
<dbReference type="GO" id="GO:0005769">
    <property type="term" value="C:early endosome"/>
    <property type="evidence" value="ECO:0007669"/>
    <property type="project" value="UniProtKB-SubCell"/>
</dbReference>
<dbReference type="GO" id="GO:0005576">
    <property type="term" value="C:extracellular region"/>
    <property type="evidence" value="ECO:0007669"/>
    <property type="project" value="UniProtKB-SubCell"/>
</dbReference>
<dbReference type="GO" id="GO:0001650">
    <property type="term" value="C:fibrillar center"/>
    <property type="evidence" value="ECO:0000314"/>
    <property type="project" value="HPA"/>
</dbReference>
<dbReference type="GO" id="GO:0005634">
    <property type="term" value="C:nucleus"/>
    <property type="evidence" value="ECO:0000314"/>
    <property type="project" value="UniProtKB"/>
</dbReference>
<dbReference type="GO" id="GO:0001891">
    <property type="term" value="C:phagocytic cup"/>
    <property type="evidence" value="ECO:0000314"/>
    <property type="project" value="UniProtKB"/>
</dbReference>
<dbReference type="GO" id="GO:0005886">
    <property type="term" value="C:plasma membrane"/>
    <property type="evidence" value="ECO:0000314"/>
    <property type="project" value="HPA"/>
</dbReference>
<dbReference type="GO" id="GO:0098794">
    <property type="term" value="C:postsynapse"/>
    <property type="evidence" value="ECO:0000304"/>
    <property type="project" value="ARUK-UCL"/>
</dbReference>
<dbReference type="GO" id="GO:0050785">
    <property type="term" value="F:advanced glycation end-product receptor activity"/>
    <property type="evidence" value="ECO:0000303"/>
    <property type="project" value="ARUK-UCL"/>
</dbReference>
<dbReference type="GO" id="GO:0001540">
    <property type="term" value="F:amyloid-beta binding"/>
    <property type="evidence" value="ECO:0000314"/>
    <property type="project" value="ARUK-UCL"/>
</dbReference>
<dbReference type="GO" id="GO:0003677">
    <property type="term" value="F:DNA binding"/>
    <property type="evidence" value="ECO:0000314"/>
    <property type="project" value="UniProtKB"/>
</dbReference>
<dbReference type="GO" id="GO:0042393">
    <property type="term" value="F:histone binding"/>
    <property type="evidence" value="ECO:0000314"/>
    <property type="project" value="UniProtKB"/>
</dbReference>
<dbReference type="GO" id="GO:0042802">
    <property type="term" value="F:identical protein binding"/>
    <property type="evidence" value="ECO:0000353"/>
    <property type="project" value="IntAct"/>
</dbReference>
<dbReference type="GO" id="GO:0005055">
    <property type="term" value="F:laminin receptor activity"/>
    <property type="evidence" value="ECO:0000318"/>
    <property type="project" value="GO_Central"/>
</dbReference>
<dbReference type="GO" id="GO:0060090">
    <property type="term" value="F:molecular adaptor activity"/>
    <property type="evidence" value="ECO:0000269"/>
    <property type="project" value="DisProt"/>
</dbReference>
<dbReference type="GO" id="GO:0044877">
    <property type="term" value="F:protein-containing complex binding"/>
    <property type="evidence" value="ECO:0000353"/>
    <property type="project" value="ARUK-UCL"/>
</dbReference>
<dbReference type="GO" id="GO:0003723">
    <property type="term" value="F:RNA binding"/>
    <property type="evidence" value="ECO:0000314"/>
    <property type="project" value="UniProtKB"/>
</dbReference>
<dbReference type="GO" id="GO:0044548">
    <property type="term" value="F:S100 protein binding"/>
    <property type="evidence" value="ECO:0000353"/>
    <property type="project" value="UniProtKB"/>
</dbReference>
<dbReference type="GO" id="GO:0005044">
    <property type="term" value="F:scavenger receptor activity"/>
    <property type="evidence" value="ECO:0000304"/>
    <property type="project" value="ARUK-UCL"/>
</dbReference>
<dbReference type="GO" id="GO:0038023">
    <property type="term" value="F:signaling receptor activity"/>
    <property type="evidence" value="ECO:0000315"/>
    <property type="project" value="ARUK-UCL"/>
</dbReference>
<dbReference type="GO" id="GO:0004888">
    <property type="term" value="F:transmembrane signaling receptor activity"/>
    <property type="evidence" value="ECO:0000304"/>
    <property type="project" value="ProtInc"/>
</dbReference>
<dbReference type="GO" id="GO:0048143">
    <property type="term" value="P:astrocyte activation"/>
    <property type="evidence" value="ECO:0000316"/>
    <property type="project" value="ARUK-UCL"/>
</dbReference>
<dbReference type="GO" id="GO:0007166">
    <property type="term" value="P:cell surface receptor signaling pathway"/>
    <property type="evidence" value="ECO:0000304"/>
    <property type="project" value="ProtInc"/>
</dbReference>
<dbReference type="GO" id="GO:1904646">
    <property type="term" value="P:cellular response to amyloid-beta"/>
    <property type="evidence" value="ECO:0000250"/>
    <property type="project" value="ARUK-UCL"/>
</dbReference>
<dbReference type="GO" id="GO:0010255">
    <property type="term" value="P:glucose mediated signaling pathway"/>
    <property type="evidence" value="ECO:0000314"/>
    <property type="project" value="CAFA"/>
</dbReference>
<dbReference type="GO" id="GO:0050930">
    <property type="term" value="P:induction of positive chemotaxis"/>
    <property type="evidence" value="ECO:0007669"/>
    <property type="project" value="Ensembl"/>
</dbReference>
<dbReference type="GO" id="GO:0006954">
    <property type="term" value="P:inflammatory response"/>
    <property type="evidence" value="ECO:0000304"/>
    <property type="project" value="ProtInc"/>
</dbReference>
<dbReference type="GO" id="GO:0007611">
    <property type="term" value="P:learning or memory"/>
    <property type="evidence" value="ECO:0000316"/>
    <property type="project" value="ARUK-UCL"/>
</dbReference>
<dbReference type="GO" id="GO:0001774">
    <property type="term" value="P:microglial cell activation"/>
    <property type="evidence" value="ECO:0000316"/>
    <property type="project" value="ARUK-UCL"/>
</dbReference>
<dbReference type="GO" id="GO:1903523">
    <property type="term" value="P:negative regulation of blood circulation"/>
    <property type="evidence" value="ECO:0000250"/>
    <property type="project" value="ARUK-UCL"/>
</dbReference>
<dbReference type="GO" id="GO:1904597">
    <property type="term" value="P:negative regulation of connective tissue replacement involved in inflammatory response wound healing"/>
    <property type="evidence" value="ECO:0007669"/>
    <property type="project" value="Ensembl"/>
</dbReference>
<dbReference type="GO" id="GO:0032693">
    <property type="term" value="P:negative regulation of interleukin-10 production"/>
    <property type="evidence" value="ECO:0000314"/>
    <property type="project" value="UniProtKB"/>
</dbReference>
<dbReference type="GO" id="GO:1900453">
    <property type="term" value="P:negative regulation of long-term synaptic depression"/>
    <property type="evidence" value="ECO:0000316"/>
    <property type="project" value="ARUK-UCL"/>
</dbReference>
<dbReference type="GO" id="GO:1900272">
    <property type="term" value="P:negative regulation of long-term synaptic potentiation"/>
    <property type="evidence" value="ECO:0000316"/>
    <property type="project" value="ARUK-UCL"/>
</dbReference>
<dbReference type="GO" id="GO:0031175">
    <property type="term" value="P:neuron projection development"/>
    <property type="evidence" value="ECO:0000316"/>
    <property type="project" value="UniProtKB"/>
</dbReference>
<dbReference type="GO" id="GO:0006909">
    <property type="term" value="P:phagocytosis"/>
    <property type="evidence" value="ECO:0000315"/>
    <property type="project" value="UniProtKB"/>
</dbReference>
<dbReference type="GO" id="GO:0042104">
    <property type="term" value="P:positive regulation of activated T cell proliferation"/>
    <property type="evidence" value="ECO:0000315"/>
    <property type="project" value="UniProtKB"/>
</dbReference>
<dbReference type="GO" id="GO:1902993">
    <property type="term" value="P:positive regulation of amyloid precursor protein catabolic process"/>
    <property type="evidence" value="ECO:0000316"/>
    <property type="project" value="ARUK-UCL"/>
</dbReference>
<dbReference type="GO" id="GO:0032722">
    <property type="term" value="P:positive regulation of chemokine production"/>
    <property type="evidence" value="ECO:0000250"/>
    <property type="project" value="ARUK-UCL"/>
</dbReference>
<dbReference type="GO" id="GO:2001200">
    <property type="term" value="P:positive regulation of dendritic cell differentiation"/>
    <property type="evidence" value="ECO:0000315"/>
    <property type="project" value="UniProtKB"/>
</dbReference>
<dbReference type="GO" id="GO:2000105">
    <property type="term" value="P:positive regulation of DNA-templated DNA replication"/>
    <property type="evidence" value="ECO:0000315"/>
    <property type="project" value="UniProtKB"/>
</dbReference>
<dbReference type="GO" id="GO:2000781">
    <property type="term" value="P:positive regulation of double-strand break repair"/>
    <property type="evidence" value="ECO:0007669"/>
    <property type="project" value="Ensembl"/>
</dbReference>
<dbReference type="GO" id="GO:1904472">
    <property type="term" value="P:positive regulation of endothelin production"/>
    <property type="evidence" value="ECO:0000250"/>
    <property type="project" value="ARUK-UCL"/>
</dbReference>
<dbReference type="GO" id="GO:0070374">
    <property type="term" value="P:positive regulation of ERK1 and ERK2 cascade"/>
    <property type="evidence" value="ECO:0000316"/>
    <property type="project" value="ARUK-UCL"/>
</dbReference>
<dbReference type="GO" id="GO:0034116">
    <property type="term" value="P:positive regulation of heterotypic cell-cell adhesion"/>
    <property type="evidence" value="ECO:0000316"/>
    <property type="project" value="ARUK-UCL"/>
</dbReference>
<dbReference type="GO" id="GO:0032731">
    <property type="term" value="P:positive regulation of interleukin-1 beta production"/>
    <property type="evidence" value="ECO:0000250"/>
    <property type="project" value="ARUK-UCL"/>
</dbReference>
<dbReference type="GO" id="GO:0032735">
    <property type="term" value="P:positive regulation of interleukin-12 production"/>
    <property type="evidence" value="ECO:0000315"/>
    <property type="project" value="UniProtKB"/>
</dbReference>
<dbReference type="GO" id="GO:0032755">
    <property type="term" value="P:positive regulation of interleukin-6 production"/>
    <property type="evidence" value="ECO:0000250"/>
    <property type="project" value="ARUK-UCL"/>
</dbReference>
<dbReference type="GO" id="GO:0046330">
    <property type="term" value="P:positive regulation of JNK cascade"/>
    <property type="evidence" value="ECO:0000316"/>
    <property type="project" value="ARUK-UCL"/>
</dbReference>
<dbReference type="GO" id="GO:0071639">
    <property type="term" value="P:positive regulation of monocyte chemotactic protein-1 production"/>
    <property type="evidence" value="ECO:0007669"/>
    <property type="project" value="Ensembl"/>
</dbReference>
<dbReference type="GO" id="GO:2000439">
    <property type="term" value="P:positive regulation of monocyte extravasation"/>
    <property type="evidence" value="ECO:0000315"/>
    <property type="project" value="ARUK-UCL"/>
</dbReference>
<dbReference type="GO" id="GO:0051092">
    <property type="term" value="P:positive regulation of NF-kappaB transcription factor activity"/>
    <property type="evidence" value="ECO:0000314"/>
    <property type="project" value="UniProtKB"/>
</dbReference>
<dbReference type="GO" id="GO:1901224">
    <property type="term" value="P:positive regulation of non-canonical NF-kappaB signal transduction"/>
    <property type="evidence" value="ECO:0000316"/>
    <property type="project" value="ARUK-UCL"/>
</dbReference>
<dbReference type="GO" id="GO:1900745">
    <property type="term" value="P:positive regulation of p38MAPK cascade"/>
    <property type="evidence" value="ECO:0000316"/>
    <property type="project" value="ARUK-UCL"/>
</dbReference>
<dbReference type="GO" id="GO:0032760">
    <property type="term" value="P:positive regulation of tumor necrosis factor production"/>
    <property type="evidence" value="ECO:0000250"/>
    <property type="project" value="ARUK-UCL"/>
</dbReference>
<dbReference type="GO" id="GO:0072657">
    <property type="term" value="P:protein localization to membrane"/>
    <property type="evidence" value="ECO:0007669"/>
    <property type="project" value="Ensembl"/>
</dbReference>
<dbReference type="GO" id="GO:2000514">
    <property type="term" value="P:regulation of CD4-positive, alpha-beta T cell activation"/>
    <property type="evidence" value="ECO:0000314"/>
    <property type="project" value="UniProtKB"/>
</dbReference>
<dbReference type="GO" id="GO:0050727">
    <property type="term" value="P:regulation of inflammatory response"/>
    <property type="evidence" value="ECO:0000318"/>
    <property type="project" value="GO_Central"/>
</dbReference>
<dbReference type="GO" id="GO:1900271">
    <property type="term" value="P:regulation of long-term synaptic potentiation"/>
    <property type="evidence" value="ECO:0000250"/>
    <property type="project" value="ARUK-UCL"/>
</dbReference>
<dbReference type="GO" id="GO:1901222">
    <property type="term" value="P:regulation of non-canonical NF-kappaB signal transduction"/>
    <property type="evidence" value="ECO:0000303"/>
    <property type="project" value="ARUK-UCL"/>
</dbReference>
<dbReference type="GO" id="GO:1900744">
    <property type="term" value="P:regulation of p38MAPK cascade"/>
    <property type="evidence" value="ECO:0000250"/>
    <property type="project" value="ARUK-UCL"/>
</dbReference>
<dbReference type="GO" id="GO:0150003">
    <property type="term" value="P:regulation of spontaneous synaptic transmission"/>
    <property type="evidence" value="ECO:0000316"/>
    <property type="project" value="ARUK-UCL"/>
</dbReference>
<dbReference type="GO" id="GO:0048167">
    <property type="term" value="P:regulation of synaptic plasticity"/>
    <property type="evidence" value="ECO:0000304"/>
    <property type="project" value="ARUK-UCL"/>
</dbReference>
<dbReference type="GO" id="GO:0001914">
    <property type="term" value="P:regulation of T cell mediated cytotoxicity"/>
    <property type="evidence" value="ECO:0000314"/>
    <property type="project" value="UniProtKB"/>
</dbReference>
<dbReference type="GO" id="GO:1904645">
    <property type="term" value="P:response to amyloid-beta"/>
    <property type="evidence" value="ECO:0000250"/>
    <property type="project" value="ARUK-UCL"/>
</dbReference>
<dbReference type="GO" id="GO:0001666">
    <property type="term" value="P:response to hypoxia"/>
    <property type="evidence" value="ECO:0007669"/>
    <property type="project" value="Ensembl"/>
</dbReference>
<dbReference type="GO" id="GO:0009611">
    <property type="term" value="P:response to wounding"/>
    <property type="evidence" value="ECO:0000304"/>
    <property type="project" value="ProtInc"/>
</dbReference>
<dbReference type="GO" id="GO:0045056">
    <property type="term" value="P:transcytosis"/>
    <property type="evidence" value="ECO:0000250"/>
    <property type="project" value="ARUK-UCL"/>
</dbReference>
<dbReference type="GO" id="GO:0150104">
    <property type="term" value="P:transport across blood-brain barrier"/>
    <property type="evidence" value="ECO:0000314"/>
    <property type="project" value="ARUK-UCL"/>
</dbReference>
<dbReference type="CDD" id="cd00096">
    <property type="entry name" value="Ig"/>
    <property type="match status" value="2"/>
</dbReference>
<dbReference type="DisProt" id="DP02555"/>
<dbReference type="FunFam" id="2.60.40.10:FF:000649">
    <property type="entry name" value="Advanced glycosylation end product-specific receptor"/>
    <property type="match status" value="1"/>
</dbReference>
<dbReference type="FunFam" id="2.60.40.10:FF:000969">
    <property type="entry name" value="Advanced glycosylation end product-specific receptor"/>
    <property type="match status" value="1"/>
</dbReference>
<dbReference type="FunFam" id="2.60.40.10:FF:001470">
    <property type="entry name" value="Advanced glycosylation end product-specific receptor"/>
    <property type="match status" value="1"/>
</dbReference>
<dbReference type="Gene3D" id="2.60.40.10">
    <property type="entry name" value="Immunoglobulins"/>
    <property type="match status" value="3"/>
</dbReference>
<dbReference type="InterPro" id="IPR013162">
    <property type="entry name" value="CD80_C2-set"/>
</dbReference>
<dbReference type="InterPro" id="IPR007110">
    <property type="entry name" value="Ig-like_dom"/>
</dbReference>
<dbReference type="InterPro" id="IPR036179">
    <property type="entry name" value="Ig-like_dom_sf"/>
</dbReference>
<dbReference type="InterPro" id="IPR013783">
    <property type="entry name" value="Ig-like_fold"/>
</dbReference>
<dbReference type="InterPro" id="IPR003006">
    <property type="entry name" value="Ig/MHC_CS"/>
</dbReference>
<dbReference type="InterPro" id="IPR003599">
    <property type="entry name" value="Ig_sub"/>
</dbReference>
<dbReference type="InterPro" id="IPR003598">
    <property type="entry name" value="Ig_sub2"/>
</dbReference>
<dbReference type="InterPro" id="IPR051116">
    <property type="entry name" value="Surface_Rcpt/Adhesion_Mol"/>
</dbReference>
<dbReference type="PANTHER" id="PTHR11973:SF20">
    <property type="entry name" value="ADVANCED GLYCOSYLATION END PRODUCT-SPECIFIC RECEPTOR"/>
    <property type="match status" value="1"/>
</dbReference>
<dbReference type="PANTHER" id="PTHR11973">
    <property type="entry name" value="CELL SURFACE GLYCOPROTEIN MUC18-RELATED"/>
    <property type="match status" value="1"/>
</dbReference>
<dbReference type="Pfam" id="PF08205">
    <property type="entry name" value="C2-set_2"/>
    <property type="match status" value="1"/>
</dbReference>
<dbReference type="Pfam" id="PF13927">
    <property type="entry name" value="Ig_3"/>
    <property type="match status" value="1"/>
</dbReference>
<dbReference type="SMART" id="SM00409">
    <property type="entry name" value="IG"/>
    <property type="match status" value="2"/>
</dbReference>
<dbReference type="SMART" id="SM00408">
    <property type="entry name" value="IGc2"/>
    <property type="match status" value="2"/>
</dbReference>
<dbReference type="SUPFAM" id="SSF48726">
    <property type="entry name" value="Immunoglobulin"/>
    <property type="match status" value="3"/>
</dbReference>
<dbReference type="PROSITE" id="PS50835">
    <property type="entry name" value="IG_LIKE"/>
    <property type="match status" value="3"/>
</dbReference>
<dbReference type="PROSITE" id="PS00290">
    <property type="entry name" value="IG_MHC"/>
    <property type="match status" value="1"/>
</dbReference>
<accession>Q15109</accession>
<accession>A2BFI7</accession>
<accession>A6NKF0</accession>
<accession>A7Y2U9</accession>
<accession>B0V176</accession>
<accession>Q15279</accession>
<accession>Q3L1R4</accession>
<accession>Q3L1R5</accession>
<accession>Q3L1R6</accession>
<accession>Q3L1R7</accession>
<accession>Q3L1R8</accession>
<accession>Q3L1S0</accession>
<accession>Q86SN1</accession>
<accession>Q9H2X7</accession>
<accession>Q9Y3R3</accession>
<accession>V5R6A3</accession>
<name>RAGE_HUMAN</name>
<evidence type="ECO:0000250" key="1">
    <source>
        <dbReference type="UniProtKB" id="Q62151"/>
    </source>
</evidence>
<evidence type="ECO:0000255" key="2"/>
<evidence type="ECO:0000256" key="3">
    <source>
        <dbReference type="SAM" id="MobiDB-lite"/>
    </source>
</evidence>
<evidence type="ECO:0000269" key="4">
    <source>
    </source>
</evidence>
<evidence type="ECO:0000269" key="5">
    <source>
    </source>
</evidence>
<evidence type="ECO:0000269" key="6">
    <source>
    </source>
</evidence>
<evidence type="ECO:0000269" key="7">
    <source>
    </source>
</evidence>
<evidence type="ECO:0000269" key="8">
    <source>
    </source>
</evidence>
<evidence type="ECO:0000269" key="9">
    <source>
    </source>
</evidence>
<evidence type="ECO:0000269" key="10">
    <source>
    </source>
</evidence>
<evidence type="ECO:0000269" key="11">
    <source>
    </source>
</evidence>
<evidence type="ECO:0000269" key="12">
    <source>
    </source>
</evidence>
<evidence type="ECO:0000269" key="13">
    <source>
    </source>
</evidence>
<evidence type="ECO:0000269" key="14">
    <source>
    </source>
</evidence>
<evidence type="ECO:0000269" key="15">
    <source>
    </source>
</evidence>
<evidence type="ECO:0000269" key="16">
    <source>
    </source>
</evidence>
<evidence type="ECO:0000269" key="17">
    <source>
    </source>
</evidence>
<evidence type="ECO:0000269" key="18">
    <source>
    </source>
</evidence>
<evidence type="ECO:0000269" key="19">
    <source>
    </source>
</evidence>
<evidence type="ECO:0000269" key="20">
    <source>
    </source>
</evidence>
<evidence type="ECO:0000269" key="21">
    <source>
    </source>
</evidence>
<evidence type="ECO:0000269" key="22">
    <source>
    </source>
</evidence>
<evidence type="ECO:0000269" key="23">
    <source>
    </source>
</evidence>
<evidence type="ECO:0000269" key="24">
    <source>
    </source>
</evidence>
<evidence type="ECO:0000269" key="25">
    <source ref="29"/>
</evidence>
<evidence type="ECO:0000269" key="26">
    <source ref="3"/>
</evidence>
<evidence type="ECO:0000303" key="27">
    <source>
    </source>
</evidence>
<evidence type="ECO:0000303" key="28">
    <source>
    </source>
</evidence>
<evidence type="ECO:0000303" key="29">
    <source>
    </source>
</evidence>
<evidence type="ECO:0000303" key="30">
    <source ref="4"/>
</evidence>
<evidence type="ECO:0000305" key="31"/>
<evidence type="ECO:0007744" key="32">
    <source>
        <dbReference type="PDB" id="4OI7"/>
    </source>
</evidence>
<evidence type="ECO:0007744" key="33">
    <source>
        <dbReference type="PDB" id="4OI8"/>
    </source>
</evidence>
<evidence type="ECO:0007829" key="34">
    <source>
        <dbReference type="PDB" id="2E5E"/>
    </source>
</evidence>
<evidence type="ECO:0007829" key="35">
    <source>
        <dbReference type="PDB" id="2LE9"/>
    </source>
</evidence>
<evidence type="ECO:0007829" key="36">
    <source>
        <dbReference type="PDB" id="2LMB"/>
    </source>
</evidence>
<evidence type="ECO:0007829" key="37">
    <source>
        <dbReference type="PDB" id="3CJJ"/>
    </source>
</evidence>
<evidence type="ECO:0007829" key="38">
    <source>
        <dbReference type="PDB" id="3O3U"/>
    </source>
</evidence>
<evidence type="ECO:0007829" key="39">
    <source>
        <dbReference type="PDB" id="4OF5"/>
    </source>
</evidence>
<evidence type="ECO:0007829" key="40">
    <source>
        <dbReference type="PDB" id="4P2Y"/>
    </source>
</evidence>
<evidence type="ECO:0007829" key="41">
    <source>
        <dbReference type="PDB" id="6VXG"/>
    </source>
</evidence>
<evidence type="ECO:0007829" key="42">
    <source>
        <dbReference type="PDB" id="6XQ1"/>
    </source>
</evidence>
<evidence type="ECO:0007829" key="43">
    <source>
        <dbReference type="PDB" id="6XQ9"/>
    </source>
</evidence>
<sequence>MAAGTAVGAWVLVLSLWGAVVGAQNITARIGEPLVLKCKGAPKKPPQRLEWKLNTGRTEAWKVLSPQGGGPWDSVARVLPNGSLFLPAVGIQDEGIFRCQAMNRNGKETKSNYRVRVYQIPGKPEIVDSASELTAGVPNKVGTCVSEGSYPAGTLSWHLDGKPLVPNEKGVSVKEQTRRHPETGLFTLQSELMVTPARGGDPRPTFSCSFSPGLPRHRALRTAPIQPRVWEPVPLEEVQLVVEPEGGAVAPGGTVTLTCEVPAQPSPQIHWMKDGVPLPLPPSPVLILPEIGPQDQGTYSCVATHSSHGPQESRAVSISIIEPGEEGPTAGSVGGSGLGTLALALGILGGLGTAALLIGVILWQRRQRRGEERKAPENQEEEEERAELNQSEEPEAGESSTGGP</sequence>
<reference key="1">
    <citation type="journal article" date="1992" name="J. Biol. Chem.">
        <title>Cloning and expression of a cell surface receptor for advanced glycosylation end products of proteins.</title>
        <authorList>
            <person name="Neeper M."/>
            <person name="Schmidt A.M."/>
            <person name="Brett J."/>
            <person name="Yan S.D."/>
            <person name="Wang F."/>
            <person name="Pan Y.C."/>
            <person name="Elliston K."/>
            <person name="Stern D."/>
            <person name="Shaw A."/>
        </authorList>
    </citation>
    <scope>NUCLEOTIDE SEQUENCE [MRNA] (ISOFORM 1)</scope>
    <source>
        <tissue>Lung</tissue>
    </source>
</reference>
<reference key="2">
    <citation type="journal article" date="1994" name="Genomics">
        <title>Three genes in the human MHC class III region near the junction with the class II: gene for receptor of advanced glycosylation end products, PBX2 homeobox gene and a notch homolog, human counterpart of mouse mammary tumor gene int-3.</title>
        <authorList>
            <person name="Sugaya K."/>
            <person name="Fukagawa T."/>
            <person name="Matsumoto K."/>
            <person name="Mita K."/>
            <person name="Takahashi E."/>
            <person name="Ando A."/>
            <person name="Inoko H."/>
            <person name="Ikemura T."/>
        </authorList>
    </citation>
    <scope>NUCLEOTIDE SEQUENCE [GENOMIC DNA] (ISOFORM 1)</scope>
</reference>
<reference key="3">
    <citation type="submission" date="2000-01" db="EMBL/GenBank/DDBJ databases">
        <title>Molecular heterogeneity of the receptor for advanced glycation endproducts.</title>
        <authorList>
            <person name="Abedin M.J."/>
            <person name="Yonekura H."/>
            <person name="Migita H."/>
            <person name="Karasawa J."/>
            <person name="Yamamoto Y."/>
            <person name="Yamamoto H."/>
        </authorList>
    </citation>
    <scope>NUCLEOTIDE SEQUENCE [MRNA] (ISOFORM 1)</scope>
    <scope>VARIANT ARG-100</scope>
</reference>
<reference key="4">
    <citation type="submission" date="1999-05" db="EMBL/GenBank/DDBJ databases">
        <title>cDNA cloning of a novel secreted isoform of the human receptor for advanced glycation end products (RAGE) and characterization of cells co-expressing cell-surface scavenger receptors and Swedish mutant amyloid precursor protein.</title>
        <authorList>
            <person name="Malherbe P."/>
            <person name="Richards J."/>
            <person name="Gaillard H."/>
            <person name="Thompson A."/>
            <person name="Diener C."/>
            <person name="Schuler A."/>
            <person name="Huber G."/>
        </authorList>
    </citation>
    <scope>NUCLEOTIDE SEQUENCE [MRNA] (ISOFORM 2)</scope>
</reference>
<reference key="5">
    <citation type="journal article" date="2003" name="Biochem. J.">
        <title>Novel splice variants of the receptor for advanced glycation end-products expressed in human vascular endothelial cells and pericytes, and their putative roles in diabetes-induced vascular injury.</title>
        <authorList>
            <person name="Yonekura H."/>
            <person name="Yamamoto Y."/>
            <person name="Sakurai S."/>
            <person name="Petrova R.G."/>
            <person name="Abedin J."/>
            <person name="Li H."/>
            <person name="Yasui K."/>
            <person name="Takeuchi M."/>
            <person name="Makita Z."/>
            <person name="Takasawa S."/>
            <person name="Okamoto H."/>
            <person name="Watanabe T."/>
            <person name="Yamamoto H."/>
        </authorList>
    </citation>
    <scope>NUCLEOTIDE SEQUENCE [MRNA] (ISOFORM 3)</scope>
    <scope>ALTERNATIVE SPLICING</scope>
    <source>
        <tissue>Skin</tissue>
    </source>
</reference>
<reference key="6">
    <citation type="journal article" date="2003" name="Genome Res.">
        <title>Analysis of the gene-dense major histocompatibility complex class III region and its comparison to mouse.</title>
        <authorList>
            <person name="Xie T."/>
            <person name="Rowen L."/>
            <person name="Aguado B."/>
            <person name="Ahearn M.E."/>
            <person name="Madan A."/>
            <person name="Qin S."/>
            <person name="Campbell R.D."/>
            <person name="Hood L."/>
        </authorList>
    </citation>
    <scope>NUCLEOTIDE SEQUENCE [LARGE SCALE GENOMIC DNA]</scope>
</reference>
<reference key="7">
    <citation type="journal article" date="2008" name="FASEB J.">
        <title>Identification, classification, and expression of RAGE gene splice variants.</title>
        <authorList>
            <person name="Hudson B.I."/>
            <person name="Carter A.M."/>
            <person name="Harja E."/>
            <person name="Kalea A.Z."/>
            <person name="Arriero M."/>
            <person name="Yang H."/>
            <person name="Grant P.J."/>
            <person name="Schmidt A.M."/>
        </authorList>
    </citation>
    <scope>NUCLEOTIDE SEQUENCE [MRNA] (ISOFORMS 1; 3; 4; 5; 6; 7; 8 AND 9)</scope>
    <scope>ALTERNATIVE SPLICING</scope>
    <source>
        <tissue>Aortic smooth muscle</tissue>
        <tissue>Lung</tissue>
    </source>
</reference>
<reference key="8">
    <citation type="journal article" date="2013" name="PLoS ONE">
        <title>Alternative splicing of the RAGE cytoplasmic domain regulates cell signaling and function.</title>
        <authorList>
            <person name="Jules J."/>
            <person name="Maiguel D."/>
            <person name="Hudson B.I."/>
        </authorList>
    </citation>
    <scope>NUCLEOTIDE SEQUENCE [MRNA] (ISOFORM 10)</scope>
    <scope>SUBCELLULAR LOCATION (ISOFORM 10)</scope>
    <source>
        <tissue>Lung</tissue>
    </source>
</reference>
<reference key="9">
    <citation type="journal article" date="2004" name="Nat. Genet.">
        <title>Complete sequencing and characterization of 21,243 full-length human cDNAs.</title>
        <authorList>
            <person name="Ota T."/>
            <person name="Suzuki Y."/>
            <person name="Nishikawa T."/>
            <person name="Otsuki T."/>
            <person name="Sugiyama T."/>
            <person name="Irie R."/>
            <person name="Wakamatsu A."/>
            <person name="Hayashi K."/>
            <person name="Sato H."/>
            <person name="Nagai K."/>
            <person name="Kimura K."/>
            <person name="Makita H."/>
            <person name="Sekine M."/>
            <person name="Obayashi M."/>
            <person name="Nishi T."/>
            <person name="Shibahara T."/>
            <person name="Tanaka T."/>
            <person name="Ishii S."/>
            <person name="Yamamoto J."/>
            <person name="Saito K."/>
            <person name="Kawai Y."/>
            <person name="Isono Y."/>
            <person name="Nakamura Y."/>
            <person name="Nagahari K."/>
            <person name="Murakami K."/>
            <person name="Yasuda T."/>
            <person name="Iwayanagi T."/>
            <person name="Wagatsuma M."/>
            <person name="Shiratori A."/>
            <person name="Sudo H."/>
            <person name="Hosoiri T."/>
            <person name="Kaku Y."/>
            <person name="Kodaira H."/>
            <person name="Kondo H."/>
            <person name="Sugawara M."/>
            <person name="Takahashi M."/>
            <person name="Kanda K."/>
            <person name="Yokoi T."/>
            <person name="Furuya T."/>
            <person name="Kikkawa E."/>
            <person name="Omura Y."/>
            <person name="Abe K."/>
            <person name="Kamihara K."/>
            <person name="Katsuta N."/>
            <person name="Sato K."/>
            <person name="Tanikawa M."/>
            <person name="Yamazaki M."/>
            <person name="Ninomiya K."/>
            <person name="Ishibashi T."/>
            <person name="Yamashita H."/>
            <person name="Murakawa K."/>
            <person name="Fujimori K."/>
            <person name="Tanai H."/>
            <person name="Kimata M."/>
            <person name="Watanabe M."/>
            <person name="Hiraoka S."/>
            <person name="Chiba Y."/>
            <person name="Ishida S."/>
            <person name="Ono Y."/>
            <person name="Takiguchi S."/>
            <person name="Watanabe S."/>
            <person name="Yosida M."/>
            <person name="Hotuta T."/>
            <person name="Kusano J."/>
            <person name="Kanehori K."/>
            <person name="Takahashi-Fujii A."/>
            <person name="Hara H."/>
            <person name="Tanase T.-O."/>
            <person name="Nomura Y."/>
            <person name="Togiya S."/>
            <person name="Komai F."/>
            <person name="Hara R."/>
            <person name="Takeuchi K."/>
            <person name="Arita M."/>
            <person name="Imose N."/>
            <person name="Musashino K."/>
            <person name="Yuuki H."/>
            <person name="Oshima A."/>
            <person name="Sasaki N."/>
            <person name="Aotsuka S."/>
            <person name="Yoshikawa Y."/>
            <person name="Matsunawa H."/>
            <person name="Ichihara T."/>
            <person name="Shiohata N."/>
            <person name="Sano S."/>
            <person name="Moriya S."/>
            <person name="Momiyama H."/>
            <person name="Satoh N."/>
            <person name="Takami S."/>
            <person name="Terashima Y."/>
            <person name="Suzuki O."/>
            <person name="Nakagawa S."/>
            <person name="Senoh A."/>
            <person name="Mizoguchi H."/>
            <person name="Goto Y."/>
            <person name="Shimizu F."/>
            <person name="Wakebe H."/>
            <person name="Hishigaki H."/>
            <person name="Watanabe T."/>
            <person name="Sugiyama A."/>
            <person name="Takemoto M."/>
            <person name="Kawakami B."/>
            <person name="Yamazaki M."/>
            <person name="Watanabe K."/>
            <person name="Kumagai A."/>
            <person name="Itakura S."/>
            <person name="Fukuzumi Y."/>
            <person name="Fujimori Y."/>
            <person name="Komiyama M."/>
            <person name="Tashiro H."/>
            <person name="Tanigami A."/>
            <person name="Fujiwara T."/>
            <person name="Ono T."/>
            <person name="Yamada K."/>
            <person name="Fujii Y."/>
            <person name="Ozaki K."/>
            <person name="Hirao M."/>
            <person name="Ohmori Y."/>
            <person name="Kawabata A."/>
            <person name="Hikiji T."/>
            <person name="Kobatake N."/>
            <person name="Inagaki H."/>
            <person name="Ikema Y."/>
            <person name="Okamoto S."/>
            <person name="Okitani R."/>
            <person name="Kawakami T."/>
            <person name="Noguchi S."/>
            <person name="Itoh T."/>
            <person name="Shigeta K."/>
            <person name="Senba T."/>
            <person name="Matsumura K."/>
            <person name="Nakajima Y."/>
            <person name="Mizuno T."/>
            <person name="Morinaga M."/>
            <person name="Sasaki M."/>
            <person name="Togashi T."/>
            <person name="Oyama M."/>
            <person name="Hata H."/>
            <person name="Watanabe M."/>
            <person name="Komatsu T."/>
            <person name="Mizushima-Sugano J."/>
            <person name="Satoh T."/>
            <person name="Shirai Y."/>
            <person name="Takahashi Y."/>
            <person name="Nakagawa K."/>
            <person name="Okumura K."/>
            <person name="Nagase T."/>
            <person name="Nomura N."/>
            <person name="Kikuchi H."/>
            <person name="Masuho Y."/>
            <person name="Yamashita R."/>
            <person name="Nakai K."/>
            <person name="Yada T."/>
            <person name="Nakamura Y."/>
            <person name="Ohara O."/>
            <person name="Isogai T."/>
            <person name="Sugano S."/>
        </authorList>
    </citation>
    <scope>NUCLEOTIDE SEQUENCE [LARGE SCALE MRNA] (ISOFORM 1)</scope>
    <source>
        <tissue>Lung</tissue>
    </source>
</reference>
<reference key="10">
    <citation type="journal article" date="2003" name="Nature">
        <title>The DNA sequence and analysis of human chromosome 6.</title>
        <authorList>
            <person name="Mungall A.J."/>
            <person name="Palmer S.A."/>
            <person name="Sims S.K."/>
            <person name="Edwards C.A."/>
            <person name="Ashurst J.L."/>
            <person name="Wilming L."/>
            <person name="Jones M.C."/>
            <person name="Horton R."/>
            <person name="Hunt S.E."/>
            <person name="Scott C.E."/>
            <person name="Gilbert J.G.R."/>
            <person name="Clamp M.E."/>
            <person name="Bethel G."/>
            <person name="Milne S."/>
            <person name="Ainscough R."/>
            <person name="Almeida J.P."/>
            <person name="Ambrose K.D."/>
            <person name="Andrews T.D."/>
            <person name="Ashwell R.I.S."/>
            <person name="Babbage A.K."/>
            <person name="Bagguley C.L."/>
            <person name="Bailey J."/>
            <person name="Banerjee R."/>
            <person name="Barker D.J."/>
            <person name="Barlow K.F."/>
            <person name="Bates K."/>
            <person name="Beare D.M."/>
            <person name="Beasley H."/>
            <person name="Beasley O."/>
            <person name="Bird C.P."/>
            <person name="Blakey S.E."/>
            <person name="Bray-Allen S."/>
            <person name="Brook J."/>
            <person name="Brown A.J."/>
            <person name="Brown J.Y."/>
            <person name="Burford D.C."/>
            <person name="Burrill W."/>
            <person name="Burton J."/>
            <person name="Carder C."/>
            <person name="Carter N.P."/>
            <person name="Chapman J.C."/>
            <person name="Clark S.Y."/>
            <person name="Clark G."/>
            <person name="Clee C.M."/>
            <person name="Clegg S."/>
            <person name="Cobley V."/>
            <person name="Collier R.E."/>
            <person name="Collins J.E."/>
            <person name="Colman L.K."/>
            <person name="Corby N.R."/>
            <person name="Coville G.J."/>
            <person name="Culley K.M."/>
            <person name="Dhami P."/>
            <person name="Davies J."/>
            <person name="Dunn M."/>
            <person name="Earthrowl M.E."/>
            <person name="Ellington A.E."/>
            <person name="Evans K.A."/>
            <person name="Faulkner L."/>
            <person name="Francis M.D."/>
            <person name="Frankish A."/>
            <person name="Frankland J."/>
            <person name="French L."/>
            <person name="Garner P."/>
            <person name="Garnett J."/>
            <person name="Ghori M.J."/>
            <person name="Gilby L.M."/>
            <person name="Gillson C.J."/>
            <person name="Glithero R.J."/>
            <person name="Grafham D.V."/>
            <person name="Grant M."/>
            <person name="Gribble S."/>
            <person name="Griffiths C."/>
            <person name="Griffiths M.N.D."/>
            <person name="Hall R."/>
            <person name="Halls K.S."/>
            <person name="Hammond S."/>
            <person name="Harley J.L."/>
            <person name="Hart E.A."/>
            <person name="Heath P.D."/>
            <person name="Heathcott R."/>
            <person name="Holmes S.J."/>
            <person name="Howden P.J."/>
            <person name="Howe K.L."/>
            <person name="Howell G.R."/>
            <person name="Huckle E."/>
            <person name="Humphray S.J."/>
            <person name="Humphries M.D."/>
            <person name="Hunt A.R."/>
            <person name="Johnson C.M."/>
            <person name="Joy A.A."/>
            <person name="Kay M."/>
            <person name="Keenan S.J."/>
            <person name="Kimberley A.M."/>
            <person name="King A."/>
            <person name="Laird G.K."/>
            <person name="Langford C."/>
            <person name="Lawlor S."/>
            <person name="Leongamornlert D.A."/>
            <person name="Leversha M."/>
            <person name="Lloyd C.R."/>
            <person name="Lloyd D.M."/>
            <person name="Loveland J.E."/>
            <person name="Lovell J."/>
            <person name="Martin S."/>
            <person name="Mashreghi-Mohammadi M."/>
            <person name="Maslen G.L."/>
            <person name="Matthews L."/>
            <person name="McCann O.T."/>
            <person name="McLaren S.J."/>
            <person name="McLay K."/>
            <person name="McMurray A."/>
            <person name="Moore M.J.F."/>
            <person name="Mullikin J.C."/>
            <person name="Niblett D."/>
            <person name="Nickerson T."/>
            <person name="Novik K.L."/>
            <person name="Oliver K."/>
            <person name="Overton-Larty E.K."/>
            <person name="Parker A."/>
            <person name="Patel R."/>
            <person name="Pearce A.V."/>
            <person name="Peck A.I."/>
            <person name="Phillimore B.J.C.T."/>
            <person name="Phillips S."/>
            <person name="Plumb R.W."/>
            <person name="Porter K.M."/>
            <person name="Ramsey Y."/>
            <person name="Ranby S.A."/>
            <person name="Rice C.M."/>
            <person name="Ross M.T."/>
            <person name="Searle S.M."/>
            <person name="Sehra H.K."/>
            <person name="Sheridan E."/>
            <person name="Skuce C.D."/>
            <person name="Smith S."/>
            <person name="Smith M."/>
            <person name="Spraggon L."/>
            <person name="Squares S.L."/>
            <person name="Steward C.A."/>
            <person name="Sycamore N."/>
            <person name="Tamlyn-Hall G."/>
            <person name="Tester J."/>
            <person name="Theaker A.J."/>
            <person name="Thomas D.W."/>
            <person name="Thorpe A."/>
            <person name="Tracey A."/>
            <person name="Tromans A."/>
            <person name="Tubby B."/>
            <person name="Wall M."/>
            <person name="Wallis J.M."/>
            <person name="West A.P."/>
            <person name="White S.S."/>
            <person name="Whitehead S.L."/>
            <person name="Whittaker H."/>
            <person name="Wild A."/>
            <person name="Willey D.J."/>
            <person name="Wilmer T.E."/>
            <person name="Wood J.M."/>
            <person name="Wray P.W."/>
            <person name="Wyatt J.C."/>
            <person name="Young L."/>
            <person name="Younger R.M."/>
            <person name="Bentley D.R."/>
            <person name="Coulson A."/>
            <person name="Durbin R.M."/>
            <person name="Hubbard T."/>
            <person name="Sulston J.E."/>
            <person name="Dunham I."/>
            <person name="Rogers J."/>
            <person name="Beck S."/>
        </authorList>
    </citation>
    <scope>NUCLEOTIDE SEQUENCE [LARGE SCALE GENOMIC DNA]</scope>
    <scope>VARIANT SER-82</scope>
</reference>
<reference key="11">
    <citation type="submission" date="2005-07" db="EMBL/GenBank/DDBJ databases">
        <authorList>
            <person name="Mural R.J."/>
            <person name="Istrail S."/>
            <person name="Sutton G.G."/>
            <person name="Florea L."/>
            <person name="Halpern A.L."/>
            <person name="Mobarry C.M."/>
            <person name="Lippert R."/>
            <person name="Walenz B."/>
            <person name="Shatkay H."/>
            <person name="Dew I."/>
            <person name="Miller J.R."/>
            <person name="Flanigan M.J."/>
            <person name="Edwards N.J."/>
            <person name="Bolanos R."/>
            <person name="Fasulo D."/>
            <person name="Halldorsson B.V."/>
            <person name="Hannenhalli S."/>
            <person name="Turner R."/>
            <person name="Yooseph S."/>
            <person name="Lu F."/>
            <person name="Nusskern D.R."/>
            <person name="Shue B.C."/>
            <person name="Zheng X.H."/>
            <person name="Zhong F."/>
            <person name="Delcher A.L."/>
            <person name="Huson D.H."/>
            <person name="Kravitz S.A."/>
            <person name="Mouchard L."/>
            <person name="Reinert K."/>
            <person name="Remington K.A."/>
            <person name="Clark A.G."/>
            <person name="Waterman M.S."/>
            <person name="Eichler E.E."/>
            <person name="Adams M.D."/>
            <person name="Hunkapiller M.W."/>
            <person name="Myers E.W."/>
            <person name="Venter J.C."/>
        </authorList>
    </citation>
    <scope>NUCLEOTIDE SEQUENCE [LARGE SCALE GENOMIC DNA]</scope>
</reference>
<reference key="12">
    <citation type="journal article" date="2004" name="Genome Res.">
        <title>The status, quality, and expansion of the NIH full-length cDNA project: the Mammalian Gene Collection (MGC).</title>
        <authorList>
            <consortium name="The MGC Project Team"/>
        </authorList>
    </citation>
    <scope>NUCLEOTIDE SEQUENCE [LARGE SCALE MRNA] (ISOFORM 1)</scope>
    <source>
        <tissue>Lung</tissue>
    </source>
</reference>
<reference key="13">
    <citation type="journal article" date="2001" name="Diabetes">
        <title>Effects of novel polymorphisms in the RAGE gene on transcriptional regulation and their association with diabetic retinopathy.</title>
        <authorList>
            <person name="Hudson B.I."/>
            <person name="Stickland M.H."/>
            <person name="Futers T.S."/>
            <person name="Grant P.J."/>
        </authorList>
    </citation>
    <scope>NUCLEOTIDE SEQUENCE [GENOMIC DNA] OF 1-12</scope>
</reference>
<reference key="14">
    <citation type="journal article" date="2009" name="BMC Biochem.">
        <title>Both Ca2+ and Zn2+ are essential for S100A12 protein oligomerization and function.</title>
        <authorList>
            <person name="Moroz O.V."/>
            <person name="Burkitt W."/>
            <person name="Wittkowski H."/>
            <person name="He W."/>
            <person name="Ianoul A."/>
            <person name="Novitskaya V."/>
            <person name="Xie J."/>
            <person name="Polyakova O."/>
            <person name="Lednev I.K."/>
            <person name="Shekhtman A."/>
            <person name="Derrick P.J."/>
            <person name="Bjoerk P."/>
            <person name="Foell D."/>
            <person name="Bronstein I.B."/>
        </authorList>
    </citation>
    <scope>INTERACTION WITH S100A12</scope>
</reference>
<reference key="15">
    <citation type="journal article" date="2010" name="FASEB J.">
        <title>RAGE-dependent signaling in microglia contributes to neuroinflammation, Abeta accumulation, and impaired learning/memory in a mouse model of Alzheimer's disease.</title>
        <authorList>
            <person name="Fang F."/>
            <person name="Lue L.-F."/>
            <person name="Yan S."/>
            <person name="Xu H."/>
            <person name="Luddy J.S."/>
            <person name="Chen D."/>
            <person name="Walker D.G."/>
            <person name="Stern D.M."/>
            <person name="Yan S."/>
            <person name="Schmidt A.M."/>
            <person name="Chen J.X."/>
            <person name="Yan S.S."/>
        </authorList>
    </citation>
    <scope>FUNCTION</scope>
</reference>
<reference key="16">
    <citation type="journal article" date="2011" name="PLoS ONE">
        <title>S100A14 stimulates cell proliferation and induces cell apoptosis at different concentrations via receptor for advanced glycation end products (RAGE).</title>
        <authorList>
            <person name="Jin Q."/>
            <person name="Chen H."/>
            <person name="Luo A."/>
            <person name="Ding F."/>
            <person name="Liu Z."/>
        </authorList>
    </citation>
    <scope>INTERACTION WITH S100A14</scope>
    <scope>FUNCTION</scope>
</reference>
<reference key="17">
    <citation type="journal article" date="2011" name="PLoS ONE">
        <title>TIRAP, an adaptor protein for TLR2/4, transduces a signal from RAGE phosphorylated upon ligand binding.</title>
        <authorList>
            <person name="Sakaguchi M."/>
            <person name="Murata H."/>
            <person name="Yamamoto K."/>
            <person name="Ono T."/>
            <person name="Sakaguchi Y."/>
            <person name="Motoyama A."/>
            <person name="Hibino T."/>
            <person name="Kataoka K."/>
            <person name="Huh N.H."/>
        </authorList>
    </citation>
    <scope>FUNCTION</scope>
    <scope>PHOSPHORYLATION AT SER-391</scope>
    <scope>INTERACTION WITH TIRAP</scope>
    <scope>MUTAGENESIS OF SER-391</scope>
</reference>
<reference key="18">
    <citation type="journal article" date="2012" name="PLoS ONE">
        <title>RAGE expression in human T cells: a link between environmental factors and adaptive immune responses.</title>
        <authorList>
            <person name="Akirav E.M."/>
            <person name="Preston-Hurlburt P."/>
            <person name="Garyu J."/>
            <person name="Henegariu O."/>
            <person name="Clynes R."/>
            <person name="Schmidt A.M."/>
            <person name="Herold K.C."/>
        </authorList>
    </citation>
    <scope>SUBCELLULAR LOCATION</scope>
    <scope>INDUCTION</scope>
</reference>
<reference key="19">
    <citation type="journal article" date="2012" name="PLoS ONE">
        <title>Disulfide bonds within the C2 domain of RAGE play key roles in its dimerization and biogenesis.</title>
        <authorList>
            <person name="Wei W."/>
            <person name="Lampe L."/>
            <person name="Park S."/>
            <person name="Vangara B.S."/>
            <person name="Waldo G.S."/>
            <person name="Cabantous S."/>
            <person name="Subaran S.S."/>
            <person name="Yang D."/>
            <person name="Lakatta E.G."/>
            <person name="Lin L."/>
        </authorList>
    </citation>
    <scope>SUBUNIT</scope>
    <scope>INTERCHAIN DISULFIDE BONDS</scope>
</reference>
<reference evidence="31" key="20">
    <citation type="journal article" date="2014" name="J. Clin. Invest.">
        <title>Longistatin in tick saliva blocks advanced glycation end-product receptor activation.</title>
        <authorList>
            <person name="Anisuzzaman X."/>
            <person name="Hatta T."/>
            <person name="Miyoshi T."/>
            <person name="Matsubayashi M."/>
            <person name="Islam M.K."/>
            <person name="Alim M.A."/>
            <person name="Anas M.A."/>
            <person name="Hasan M.M."/>
            <person name="Matsumoto Y."/>
            <person name="Yamamoto Y."/>
            <person name="Yamamoto H."/>
            <person name="Fujisaki K."/>
            <person name="Tsuji N."/>
        </authorList>
    </citation>
    <scope>FUNCTION</scope>
    <scope>INTERACTION WITH TICK LONGISTATIN</scope>
</reference>
<reference key="21">
    <citation type="journal article" date="2016" name="Sci. Rep.">
        <title>High Mobility Group Box Protein 1 Boosts Endothelial Albumin Transcytosis through the RAGE/Src/Caveolin-1 Pathway.</title>
        <authorList>
            <person name="Shang D."/>
            <person name="Peng T."/>
            <person name="Gou S."/>
            <person name="Li Y."/>
            <person name="Wu H."/>
            <person name="Wang C."/>
            <person name="Yang Z."/>
        </authorList>
    </citation>
    <scope>FUNCTION</scope>
    <scope>SUBCELLULAR LOCATION</scope>
</reference>
<reference key="22">
    <citation type="journal article" date="2017" name="FASEB J.">
        <title>Receptor for advanced glycation end products is targeted by FBXO10 for ubiquitination and degradation.</title>
        <authorList>
            <person name="Evankovich J."/>
            <person name="Lear T."/>
            <person name="Mckelvey A."/>
            <person name="Dunn S."/>
            <person name="Londino J."/>
            <person name="Liu Y."/>
            <person name="Chen B.B."/>
            <person name="Mallampalli R.K."/>
        </authorList>
    </citation>
    <scope>FUNCTION</scope>
    <scope>UBIQUITINATION AT LYS-374</scope>
    <scope>MUTAGENESIS OF LYS-374</scope>
</reference>
<reference key="23">
    <citation type="journal article" date="2017" name="Nucleic Acids Res.">
        <title>Homeostatic nuclear RAGE-ATM interaction is essential for efficient DNA repair.</title>
        <authorList>
            <person name="Kumar V."/>
            <person name="Fleming T."/>
            <person name="Terjung S."/>
            <person name="Gorzelanny C."/>
            <person name="Gebhardt C."/>
            <person name="Agrawal R."/>
            <person name="Mall M.A."/>
            <person name="Ranzinger J."/>
            <person name="Zeier M."/>
            <person name="Madhusudhan T."/>
            <person name="Ranjan S."/>
            <person name="Isermann B."/>
            <person name="Liesz A."/>
            <person name="Deshpande D."/>
            <person name="Haering H.U."/>
            <person name="Biswas S.K."/>
            <person name="Reynolds P.R."/>
            <person name="Hammes H.P."/>
            <person name="Peperkok R."/>
            <person name="Angel P."/>
            <person name="Herzig S."/>
            <person name="Nawroth P.P."/>
        </authorList>
    </citation>
    <scope>PHOSPHORYLATION AT SER-391</scope>
    <scope>MUTAGENESIS OF SER-391</scope>
</reference>
<reference key="24">
    <citation type="journal article" date="2021" name="Cell. Death. Discov.">
        <title>LPS-induced macrophage HMGB1-loaded extracellular vesicles trigger hepatocyte pyroptosis by activating the NLRP3 inflammasome.</title>
        <authorList>
            <person name="Wang G."/>
            <person name="Jin S."/>
            <person name="Huang W."/>
            <person name="Li Y."/>
            <person name="Wang J."/>
            <person name="Ling X."/>
            <person name="Huang Y."/>
            <person name="Hu Y."/>
            <person name="Li C."/>
            <person name="Meng Y."/>
            <person name="Li X."/>
        </authorList>
    </citation>
    <scope>FUNCTION</scope>
    <scope>INTERACTION WITH HMGB1</scope>
</reference>
<reference key="25">
    <citation type="journal article" date="2021" name="Cells">
        <title>A Role for RAGE in DNA Double Strand Breaks (DSBs) Detected in Pathological Placentas and Trophoblast Cells.</title>
        <authorList>
            <person name="Tsai K.Y.F."/>
            <person name="Tullis B."/>
            <person name="Breithaupt K.L."/>
            <person name="Fowers R."/>
            <person name="Jones N."/>
            <person name="Grajeda S."/>
            <person name="Reynolds P.R."/>
            <person name="Arroyo J.A."/>
        </authorList>
    </citation>
    <scope>FUNCTION</scope>
    <scope>INTERACTION WITH MRE11</scope>
    <scope>SUBCELLULAR LOCATION</scope>
    <scope>TISSUE SPECIFICITY</scope>
    <scope>INDUCTION</scope>
</reference>
<reference key="26">
    <citation type="journal article" date="2021" name="Nat. Commun.">
        <title>Targeting adaptor protein SLP76 of RAGE as a therapeutic approach for lethal sepsis.</title>
        <authorList>
            <person name="Yan Z."/>
            <person name="Luo H."/>
            <person name="Xie B."/>
            <person name="Tian T."/>
            <person name="Li S."/>
            <person name="Chen Z."/>
            <person name="Liu J."/>
            <person name="Zhao X."/>
            <person name="Zhang L."/>
            <person name="Deng Y."/>
            <person name="Billiar T.R."/>
            <person name="Jiang Y."/>
        </authorList>
    </citation>
    <scope>FUNCTION</scope>
    <scope>INTERACTION WITH LGP2</scope>
    <scope>SUBCELLULAR LOCATION</scope>
</reference>
<reference key="27">
    <citation type="journal article" date="2022" name="Commun. Biol.">
        <title>Receptor for advanced glycation end-products (RAGE) mediates phagocytosis in nonprofessional phagocytes.</title>
        <authorList>
            <person name="Yang Y."/>
            <person name="Liu G."/>
            <person name="Li F."/>
            <person name="Carey L.B."/>
            <person name="Sun C."/>
            <person name="Ling K."/>
            <person name="Tachikawa H."/>
            <person name="Fujita M."/>
            <person name="Gao X.D."/>
            <person name="Nakanishi H."/>
        </authorList>
    </citation>
    <scope>FUNCTION</scope>
    <scope>SUBCELLULAR LOCATION</scope>
</reference>
<reference key="28">
    <citation type="journal article" date="2023" name="Nucleic Acids Res.">
        <title>The importance of nuclear RAGE-Mcm2 axis in diabetes or cancer-associated replication stress.</title>
        <authorList>
            <person name="Han Z."/>
            <person name="Andrs M."/>
            <person name="Madhavan B.K."/>
            <person name="Kaymak S."/>
            <person name="Sulaj A."/>
            <person name="Kender Z."/>
            <person name="Kopf S."/>
            <person name="Kihm L."/>
            <person name="Pepperkok R."/>
            <person name="Janscak P."/>
            <person name="Nawroth P."/>
            <person name="Kumar V."/>
        </authorList>
    </citation>
    <scope>FUNCTION</scope>
    <scope>INTERACTION WITH MCM2</scope>
    <scope>SUBCELLULAR LOCATION</scope>
</reference>
<reference key="29">
    <citation type="submission" date="2008-04" db="PDB data bank">
        <title>Solution structure of the third Ig-like domain from human advanced glycosylation end product-specific receptor.</title>
        <authorList>
            <consortium name="RIKEN structural genomics initiative (RSGI)"/>
        </authorList>
    </citation>
    <scope>STRUCTURE BY NMR OF 23-121</scope>
    <scope>STRUCTURE BY NMR OF 235-323</scope>
    <scope>DISULFIDE BONDS</scope>
</reference>
<reference key="30">
    <citation type="journal article" date="2010" name="J. Biol. Chem.">
        <title>The 1.5 A crystal structure of human receptor for advanced glycation endproducts (RAGE) ectodomains reveals unique features determining ligand binding.</title>
        <authorList>
            <person name="Park H."/>
            <person name="Adsit F.G."/>
            <person name="Boyington J.C."/>
        </authorList>
    </citation>
    <scope>X-RAY CRYSTALLOGRAPHY (1.5 ANGSTROMS) OF 23-231</scope>
    <scope>FUNCTION</scope>
    <scope>DNA-BINDING</scope>
    <scope>INTERACTION WITH S100B</scope>
    <scope>DISULFIDE BOND</scope>
</reference>
<reference key="31">
    <citation type="journal article" date="2010" name="Structure">
        <title>Structural basis for ligand recognition and activation of RAGE.</title>
        <authorList>
            <person name="Koch M."/>
            <person name="Chitayat S."/>
            <person name="Dattilo B.M."/>
            <person name="Schiefner A."/>
            <person name="Diez J."/>
            <person name="Chazin W.J."/>
            <person name="Fritz G."/>
        </authorList>
    </citation>
    <scope>X-RAY CRYSTALLOGRAPHY (1.85 ANGSTROMS) OF 23-240</scope>
    <scope>INTERACTION WITH S100B</scope>
    <scope>DISULFIDE BONDS</scope>
</reference>
<reference key="32">
    <citation type="journal article" date="2011" name="Structure">
        <title>Advanced glycation end product recognition by the receptor for AGEs.</title>
        <authorList>
            <person name="Xue J."/>
            <person name="Rai V."/>
            <person name="Singer D."/>
            <person name="Chabierski S."/>
            <person name="Xie J."/>
            <person name="Reverdatto S."/>
            <person name="Burz D.S."/>
            <person name="Schmidt A.M."/>
            <person name="Hoffmann R."/>
            <person name="Shekhtman A."/>
        </authorList>
    </citation>
    <scope>STRUCTURE BY NMR OF 23-125</scope>
    <scope>FUNCTION</scope>
    <scope>DISULFIDE BONDS</scope>
</reference>
<reference evidence="32 33" key="33">
    <citation type="journal article" date="2013" name="J. Exp. Med.">
        <title>RAGE is a nucleic acid receptor that promotes inflammatory responses to DNA.</title>
        <authorList>
            <person name="Sirois C.M."/>
            <person name="Jin T."/>
            <person name="Miller A.L."/>
            <person name="Bertheloot D."/>
            <person name="Nakamura H."/>
            <person name="Horvath G.L."/>
            <person name="Mian A."/>
            <person name="Jiang J."/>
            <person name="Schrum J."/>
            <person name="Bossaller L."/>
            <person name="Pelka K."/>
            <person name="Garbi N."/>
            <person name="Brewah Y."/>
            <person name="Tian J."/>
            <person name="Chang C."/>
            <person name="Chowdhury P.S."/>
            <person name="Sims G.P."/>
            <person name="Kolbeck R."/>
            <person name="Coyle A.J."/>
            <person name="Humbles A.A."/>
            <person name="Xiao T.S."/>
            <person name="Latz E."/>
        </authorList>
    </citation>
    <scope>X-RAY CRYSTALLOGRAPHY (3.10 ANGSTROMS) OF 23-237 IN COMPLEX WITH DNA</scope>
    <scope>FUNCTION</scope>
    <scope>SUBUNIT</scope>
    <scope>SUBCELLULAR LOCATION</scope>
</reference>